<name>POLG_HCVVO</name>
<keyword id="KW-0007">Acetylation</keyword>
<keyword id="KW-1072">Activation of host autophagy by virus</keyword>
<keyword id="KW-0053">Apoptosis</keyword>
<keyword id="KW-0067">ATP-binding</keyword>
<keyword id="KW-0167">Capsid protein</keyword>
<keyword id="KW-1165">Clathrin-mediated endocytosis of virus by host</keyword>
<keyword id="KW-1015">Disulfide bond</keyword>
<keyword id="KW-1170">Fusion of virus membrane with host endosomal membrane</keyword>
<keyword id="KW-1168">Fusion of virus membrane with host membrane</keyword>
<keyword id="KW-1078">G1/S host cell cycle checkpoint dysregulation by virus</keyword>
<keyword id="KW-0325">Glycoprotein</keyword>
<keyword id="KW-0347">Helicase</keyword>
<keyword id="KW-1032">Host cell membrane</keyword>
<keyword id="KW-1035">Host cytoplasm</keyword>
<keyword id="KW-1038">Host endoplasmic reticulum</keyword>
<keyword id="KW-1041">Host lipid droplet</keyword>
<keyword id="KW-1043">Host membrane</keyword>
<keyword id="KW-1045">Host mitochondrion</keyword>
<keyword id="KW-1048">Host nucleus</keyword>
<keyword id="KW-0945">Host-virus interaction</keyword>
<keyword id="KW-0378">Hydrolase</keyword>
<keyword id="KW-1090">Inhibition of host innate immune response by virus</keyword>
<keyword id="KW-1114">Inhibition of host interferon signaling pathway by virus</keyword>
<keyword id="KW-1097">Inhibition of host MAVS by virus</keyword>
<keyword id="KW-1113">Inhibition of host RLR pathway by virus</keyword>
<keyword id="KW-1105">Inhibition of host STAT1 by virus</keyword>
<keyword id="KW-1110">Inhibition of host TRAFs by virus</keyword>
<keyword id="KW-0922">Interferon antiviral system evasion</keyword>
<keyword id="KW-0407">Ion channel</keyword>
<keyword id="KW-0406">Ion transport</keyword>
<keyword id="KW-1017">Isopeptide bond</keyword>
<keyword id="KW-0449">Lipoprotein</keyword>
<keyword id="KW-0460">Magnesium</keyword>
<keyword id="KW-0472">Membrane</keyword>
<keyword id="KW-0479">Metal-binding</keyword>
<keyword id="KW-1121">Modulation of host cell cycle by virus</keyword>
<keyword id="KW-0511">Multifunctional enzyme</keyword>
<keyword id="KW-0547">Nucleotide-binding</keyword>
<keyword id="KW-0548">Nucleotidyltransferase</keyword>
<keyword id="KW-0553">Oncogene</keyword>
<keyword id="KW-0564">Palmitate</keyword>
<keyword id="KW-0597">Phosphoprotein</keyword>
<keyword id="KW-0645">Protease</keyword>
<keyword id="KW-0687">Ribonucleoprotein</keyword>
<keyword id="KW-0694">RNA-binding</keyword>
<keyword id="KW-0696">RNA-directed RNA polymerase</keyword>
<keyword id="KW-0720">Serine protease</keyword>
<keyword id="KW-0729">SH3-binding</keyword>
<keyword id="KW-0788">Thiol protease</keyword>
<keyword id="KW-0804">Transcription</keyword>
<keyword id="KW-0805">Transcription regulation</keyword>
<keyword id="KW-0808">Transferase</keyword>
<keyword id="KW-0812">Transmembrane</keyword>
<keyword id="KW-1133">Transmembrane helix</keyword>
<keyword id="KW-0813">Transport</keyword>
<keyword id="KW-0832">Ubl conjugation</keyword>
<keyword id="KW-1161">Viral attachment to host cell</keyword>
<keyword id="KW-0261">Viral envelope protein</keyword>
<keyword id="KW-0899">Viral immunoevasion</keyword>
<keyword id="KW-1182">Viral ion channel</keyword>
<keyword id="KW-0543">Viral nucleoprotein</keyword>
<keyword id="KW-1162">Viral penetration into host cytoplasm</keyword>
<keyword id="KW-0693">Viral RNA replication</keyword>
<keyword id="KW-0946">Virion</keyword>
<keyword id="KW-1164">Virus endocytosis by host</keyword>
<keyword id="KW-1160">Virus entry into host cell</keyword>
<keyword id="KW-0862">Zinc</keyword>
<evidence type="ECO:0000250" key="1">
    <source>
        <dbReference type="UniProtKB" id="O92972"/>
    </source>
</evidence>
<evidence type="ECO:0000250" key="2">
    <source>
        <dbReference type="UniProtKB" id="P26662"/>
    </source>
</evidence>
<evidence type="ECO:0000250" key="3">
    <source>
        <dbReference type="UniProtKB" id="P26663"/>
    </source>
</evidence>
<evidence type="ECO:0000250" key="4">
    <source>
        <dbReference type="UniProtKB" id="P26664"/>
    </source>
</evidence>
<evidence type="ECO:0000250" key="5">
    <source>
        <dbReference type="UniProtKB" id="P27958"/>
    </source>
</evidence>
<evidence type="ECO:0000250" key="6">
    <source>
        <dbReference type="UniProtKB" id="P29846"/>
    </source>
</evidence>
<evidence type="ECO:0000250" key="7">
    <source>
        <dbReference type="UniProtKB" id="Q01403"/>
    </source>
</evidence>
<evidence type="ECO:0000250" key="8">
    <source>
        <dbReference type="UniProtKB" id="Q03463"/>
    </source>
</evidence>
<evidence type="ECO:0000250" key="9">
    <source>
        <dbReference type="UniProtKB" id="Q5EG65"/>
    </source>
</evidence>
<evidence type="ECO:0000250" key="10">
    <source>
        <dbReference type="UniProtKB" id="Q913V3"/>
    </source>
</evidence>
<evidence type="ECO:0000250" key="11">
    <source>
        <dbReference type="UniProtKB" id="Q99IB8"/>
    </source>
</evidence>
<evidence type="ECO:0000250" key="12">
    <source>
        <dbReference type="UniProtKB" id="Q9WMX2"/>
    </source>
</evidence>
<evidence type="ECO:0000255" key="13"/>
<evidence type="ECO:0000255" key="14">
    <source>
        <dbReference type="PROSITE-ProRule" id="PRU00539"/>
    </source>
</evidence>
<evidence type="ECO:0000255" key="15">
    <source>
        <dbReference type="PROSITE-ProRule" id="PRU00541"/>
    </source>
</evidence>
<evidence type="ECO:0000255" key="16">
    <source>
        <dbReference type="PROSITE-ProRule" id="PRU01030"/>
    </source>
</evidence>
<evidence type="ECO:0000255" key="17">
    <source>
        <dbReference type="PROSITE-ProRule" id="PRU01166"/>
    </source>
</evidence>
<evidence type="ECO:0000256" key="18">
    <source>
        <dbReference type="SAM" id="MobiDB-lite"/>
    </source>
</evidence>
<evidence type="ECO:0000305" key="19"/>
<protein>
    <recommendedName>
        <fullName>Genome polyprotein</fullName>
    </recommendedName>
    <component>
        <recommendedName>
            <fullName>Core protein precursor</fullName>
        </recommendedName>
        <alternativeName>
            <fullName>Capsid protein C</fullName>
        </alternativeName>
        <alternativeName>
            <fullName>p23</fullName>
        </alternativeName>
    </component>
    <component>
        <recommendedName>
            <fullName>Mature core protein</fullName>
        </recommendedName>
        <alternativeName>
            <fullName>p21</fullName>
        </alternativeName>
    </component>
    <component>
        <recommendedName>
            <fullName>Envelope glycoprotein E1</fullName>
        </recommendedName>
        <alternativeName>
            <fullName>gp32</fullName>
        </alternativeName>
        <alternativeName>
            <fullName>gp35</fullName>
        </alternativeName>
    </component>
    <component>
        <recommendedName>
            <fullName>Envelope glycoprotein E2</fullName>
        </recommendedName>
        <alternativeName>
            <fullName>NS1</fullName>
        </alternativeName>
        <alternativeName>
            <fullName>gp68</fullName>
        </alternativeName>
        <alternativeName>
            <fullName>gp70</fullName>
        </alternativeName>
    </component>
    <component>
        <recommendedName>
            <fullName>Viroporin p7</fullName>
        </recommendedName>
    </component>
    <component>
        <recommendedName>
            <fullName>Protease NS2</fullName>
            <shortName>p23</shortName>
            <ecNumber evidence="3">3.4.22.-</ecNumber>
        </recommendedName>
        <alternativeName>
            <fullName>Non-structural protein 2</fullName>
            <shortName>NS2</shortName>
        </alternativeName>
    </component>
    <component>
        <recommendedName>
            <fullName>Serine protease/helicase NS3</fullName>
            <ecNumber evidence="5">3.4.21.98</ecNumber>
            <ecNumber evidence="5">3.6.1.15</ecNumber>
            <ecNumber evidence="5">3.6.4.13</ecNumber>
        </recommendedName>
        <alternativeName>
            <fullName>Hepacivirin</fullName>
        </alternativeName>
        <alternativeName>
            <fullName evidence="5">NS3 helicase</fullName>
        </alternativeName>
        <alternativeName>
            <fullName evidence="5">NS3 protease</fullName>
        </alternativeName>
        <alternativeName>
            <fullName>NS3P</fullName>
        </alternativeName>
        <alternativeName>
            <fullName>Viroporin p70</fullName>
        </alternativeName>
    </component>
    <component>
        <recommendedName>
            <fullName>Non-structural protein 4A</fullName>
            <shortName>NS4A</shortName>
        </recommendedName>
        <alternativeName>
            <fullName>p8</fullName>
        </alternativeName>
    </component>
    <component>
        <recommendedName>
            <fullName>Non-structural protein 4B</fullName>
            <shortName>NS4B</shortName>
        </recommendedName>
        <alternativeName>
            <fullName>p27</fullName>
        </alternativeName>
    </component>
    <component>
        <recommendedName>
            <fullName>Non-structural protein 5A</fullName>
            <shortName>NS5A</shortName>
        </recommendedName>
        <alternativeName>
            <fullName>p56/58</fullName>
        </alternativeName>
    </component>
    <component>
        <recommendedName>
            <fullName>RNA-directed RNA polymerase</fullName>
            <ecNumber evidence="5">2.7.7.48</ecNumber>
        </recommendedName>
        <alternativeName>
            <fullName>NS5B</fullName>
        </alternativeName>
        <alternativeName>
            <fullName>p68</fullName>
        </alternativeName>
    </component>
</protein>
<accession>O92531</accession>
<feature type="initiator methionine" description="Removed; by host" evidence="4">
    <location>
        <position position="1"/>
    </location>
</feature>
<feature type="chain" id="PRO_0000450931" description="Genome polyprotein">
    <location>
        <begin position="2"/>
        <end position="3016"/>
    </location>
</feature>
<feature type="chain" id="PRO_0000045724" description="Core protein precursor" evidence="13">
    <location>
        <begin position="2"/>
        <end position="191"/>
    </location>
</feature>
<feature type="chain" id="PRO_0000045725" description="Mature core protein">
    <location>
        <begin position="2"/>
        <end position="177"/>
    </location>
</feature>
<feature type="propeptide" id="PRO_0000045726" description="ER anchor for the core protein, removed in mature form by host signal peptidase">
    <location>
        <begin position="178"/>
        <end position="191"/>
    </location>
</feature>
<feature type="chain" id="PRO_0000045727" description="Envelope glycoprotein E1">
    <location>
        <begin position="192"/>
        <end position="383"/>
    </location>
</feature>
<feature type="chain" id="PRO_0000045728" description="Envelope glycoprotein E2">
    <location>
        <begin position="384"/>
        <end position="748"/>
    </location>
</feature>
<feature type="chain" id="PRO_0000045729" description="Viroporin p7">
    <location>
        <begin position="749"/>
        <end position="811"/>
    </location>
</feature>
<feature type="chain" id="PRO_0000045730" description="Protease NS2" evidence="16">
    <location>
        <begin position="812"/>
        <end position="1028"/>
    </location>
</feature>
<feature type="chain" id="PRO_0000045731" description="Serine protease/helicase NS3">
    <location>
        <begin position="1029"/>
        <end position="1659"/>
    </location>
</feature>
<feature type="chain" id="PRO_0000045732" description="Non-structural protein 4A">
    <location>
        <begin position="1660"/>
        <end position="1713"/>
    </location>
</feature>
<feature type="chain" id="PRO_0000045733" description="Non-structural protein 4B">
    <location>
        <begin position="1714"/>
        <end position="1974"/>
    </location>
</feature>
<feature type="chain" id="PRO_0000045734" description="Non-structural protein 5A">
    <location>
        <begin position="1975"/>
        <end position="2425"/>
    </location>
</feature>
<feature type="chain" id="PRO_0000045735" description="RNA-directed RNA polymerase">
    <location>
        <begin position="2426"/>
        <end position="3016"/>
    </location>
</feature>
<feature type="topological domain" description="Cytoplasmic" evidence="13">
    <location>
        <begin position="2"/>
        <end position="168"/>
    </location>
</feature>
<feature type="transmembrane region" description="Helical" evidence="13">
    <location>
        <begin position="169"/>
        <end position="189"/>
    </location>
</feature>
<feature type="topological domain" description="Lumenal" evidence="5">
    <location>
        <begin position="190"/>
        <end position="358"/>
    </location>
</feature>
<feature type="transmembrane region" description="Helical" evidence="5">
    <location>
        <begin position="359"/>
        <end position="379"/>
    </location>
</feature>
<feature type="topological domain" description="Lumenal" evidence="5">
    <location>
        <begin position="380"/>
        <end position="727"/>
    </location>
</feature>
<feature type="transmembrane region" description="Helical" evidence="5">
    <location>
        <begin position="728"/>
        <end position="748"/>
    </location>
</feature>
<feature type="topological domain" description="Lumenal" evidence="5">
    <location>
        <begin position="749"/>
        <end position="759"/>
    </location>
</feature>
<feature type="transmembrane region" description="Helical" evidence="5">
    <location>
        <begin position="760"/>
        <end position="780"/>
    </location>
</feature>
<feature type="topological domain" description="Cytoplasmic" evidence="5">
    <location>
        <begin position="781"/>
        <end position="784"/>
    </location>
</feature>
<feature type="transmembrane region" description="Helical" evidence="5">
    <location>
        <begin position="785"/>
        <end position="805"/>
    </location>
</feature>
<feature type="topological domain" description="Lumenal" evidence="5">
    <location>
        <begin position="806"/>
        <end position="815"/>
    </location>
</feature>
<feature type="transmembrane region" description="Helical" evidence="12">
    <location>
        <begin position="816"/>
        <end position="836"/>
    </location>
</feature>
<feature type="topological domain" description="Cytoplasmic" evidence="12">
    <location>
        <begin position="837"/>
        <end position="883"/>
    </location>
</feature>
<feature type="transmembrane region" description="Helical" evidence="12">
    <location>
        <begin position="884"/>
        <end position="904"/>
    </location>
</feature>
<feature type="topological domain" description="Lumenal" evidence="12">
    <location>
        <begin position="905"/>
        <end position="930"/>
    </location>
</feature>
<feature type="transmembrane region" description="Helical" evidence="12">
    <location>
        <begin position="931"/>
        <end position="951"/>
    </location>
</feature>
<feature type="topological domain" description="Cytoplasmic" evidence="12">
    <location>
        <begin position="952"/>
        <end position="1659"/>
    </location>
</feature>
<feature type="transmembrane region" description="Helical" evidence="13">
    <location>
        <begin position="1660"/>
        <end position="1680"/>
    </location>
</feature>
<feature type="topological domain" description="Cytoplasmic" evidence="13">
    <location>
        <begin position="1681"/>
        <end position="1807"/>
    </location>
</feature>
<feature type="transmembrane region" description="Helical" evidence="13">
    <location>
        <begin position="1808"/>
        <end position="1828"/>
    </location>
</feature>
<feature type="topological domain" description="Lumenal" evidence="5">
    <location>
        <begin position="1829"/>
        <end position="1830"/>
    </location>
</feature>
<feature type="transmembrane region" description="Helical" evidence="13">
    <location>
        <begin position="1831"/>
        <end position="1851"/>
    </location>
</feature>
<feature type="topological domain" description="Cytoplasmic" evidence="13">
    <location>
        <position position="1852"/>
    </location>
</feature>
<feature type="transmembrane region" description="Helical" evidence="13">
    <location>
        <begin position="1853"/>
        <end position="1873"/>
    </location>
</feature>
<feature type="topological domain" description="Lumenal" evidence="13">
    <location>
        <begin position="1874"/>
        <end position="1883"/>
    </location>
</feature>
<feature type="transmembrane region" description="Helical" evidence="13">
    <location>
        <begin position="1884"/>
        <end position="1904"/>
    </location>
</feature>
<feature type="topological domain" description="Cytoplasmic" evidence="13">
    <location>
        <begin position="1905"/>
        <end position="1974"/>
    </location>
</feature>
<feature type="intramembrane region" evidence="5">
    <location>
        <begin position="1975"/>
        <end position="2004"/>
    </location>
</feature>
<feature type="topological domain" description="Cytoplasmic" evidence="5">
    <location>
        <begin position="2005"/>
        <end position="2995"/>
    </location>
</feature>
<feature type="transmembrane region" description="Helical" evidence="5">
    <location>
        <begin position="2996"/>
        <end position="3016"/>
    </location>
</feature>
<feature type="domain" description="Peptidase C18" evidence="16">
    <location>
        <begin position="905"/>
        <end position="1028"/>
    </location>
</feature>
<feature type="domain" description="Peptidase S29" evidence="17">
    <location>
        <begin position="1029"/>
        <end position="1210"/>
    </location>
</feature>
<feature type="domain" description="Helicase ATP-binding" evidence="15">
    <location>
        <begin position="1219"/>
        <end position="1371"/>
    </location>
</feature>
<feature type="domain" description="RdRp catalytic" evidence="14">
    <location>
        <begin position="2639"/>
        <end position="2757"/>
    </location>
</feature>
<feature type="region of interest" description="Disordered" evidence="5">
    <location>
        <begin position="2"/>
        <end position="75"/>
    </location>
</feature>
<feature type="region of interest" description="Interaction with DDX3X" evidence="9">
    <location>
        <begin position="2"/>
        <end position="59"/>
    </location>
</feature>
<feature type="region of interest" description="Interaction with EIF2AK2/PKR" evidence="2">
    <location>
        <begin position="2"/>
        <end position="58"/>
    </location>
</feature>
<feature type="region of interest" description="Interaction with STAT1" evidence="2">
    <location>
        <begin position="2"/>
        <end position="23"/>
    </location>
</feature>
<feature type="region of interest" description="Important for endoplasmic reticulum and mitochondrial localization" evidence="2">
    <location>
        <begin position="112"/>
        <end position="152"/>
    </location>
</feature>
<feature type="region of interest" description="Interaction with APOA2" evidence="6">
    <location>
        <begin position="122"/>
        <end position="173"/>
    </location>
</feature>
<feature type="region of interest" description="Important for lipid droplets localization" evidence="5">
    <location>
        <begin position="164"/>
        <end position="167"/>
    </location>
</feature>
<feature type="region of interest" description="Important for fusion" evidence="5">
    <location>
        <begin position="265"/>
        <end position="296"/>
    </location>
</feature>
<feature type="region of interest" description="HVR1" evidence="5">
    <location>
        <begin position="385"/>
        <end position="411"/>
    </location>
</feature>
<feature type="region of interest" description="HVR2" evidence="5">
    <location>
        <begin position="474"/>
        <end position="478"/>
    </location>
</feature>
<feature type="region of interest" description="CD81-binding 1" evidence="3">
    <location>
        <begin position="480"/>
        <end position="493"/>
    </location>
</feature>
<feature type="region of interest" description="CD81-binding 2" evidence="3">
    <location>
        <begin position="544"/>
        <end position="551"/>
    </location>
</feature>
<feature type="region of interest" description="PKR/eIF2-alpha phosphorylation homology domain (PePHD)">
    <location>
        <begin position="662"/>
        <end position="673"/>
    </location>
</feature>
<feature type="region of interest" description="Protease NS2-3" evidence="3">
    <location>
        <begin position="906"/>
        <end position="1208"/>
    </location>
</feature>
<feature type="region of interest" description="Interaction with host SCPS1" evidence="11">
    <location>
        <begin position="931"/>
        <end position="951"/>
    </location>
</feature>
<feature type="region of interest" description="RNA-binding" evidence="3">
    <location>
        <begin position="1488"/>
        <end position="1500"/>
    </location>
</feature>
<feature type="region of interest" description="NS3-binding" evidence="5">
    <location>
        <begin position="1681"/>
        <end position="1692"/>
    </location>
</feature>
<feature type="region of interest" description="Transcriptional activation" evidence="13">
    <location>
        <begin position="2122"/>
        <end position="2335"/>
    </location>
</feature>
<feature type="region of interest" description="FKBP8-binding" evidence="2">
    <location>
        <begin position="2122"/>
        <end position="2210"/>
    </location>
</feature>
<feature type="region of interest" description="Interaction with non-structural protein 4A" evidence="2">
    <location>
        <begin position="2137"/>
        <end position="2141"/>
    </location>
</feature>
<feature type="region of interest" description="Interaction with host SKP2" evidence="5">
    <location>
        <begin position="2191"/>
        <end position="2443"/>
    </location>
</feature>
<feature type="region of interest" description="Interaction with EIF2AK2/PKR" evidence="3">
    <location>
        <begin position="2212"/>
        <end position="2277"/>
    </location>
</feature>
<feature type="region of interest" description="ISDR" evidence="2">
    <location>
        <begin position="2212"/>
        <end position="2251"/>
    </location>
</feature>
<feature type="region of interest" description="NS4B-binding" evidence="13">
    <location>
        <begin position="2251"/>
        <end position="2309"/>
    </location>
</feature>
<feature type="region of interest" description="V3">
    <location>
        <begin position="2302"/>
        <end position="2379"/>
    </location>
</feature>
<feature type="region of interest" description="Disordered" evidence="18">
    <location>
        <begin position="2353"/>
        <end position="2414"/>
    </location>
</feature>
<feature type="short sequence motif" description="Nuclear localization signal" evidence="11">
    <location>
        <begin position="5"/>
        <end position="13"/>
    </location>
</feature>
<feature type="short sequence motif" description="Nuclear localization signal" evidence="11">
    <location>
        <begin position="38"/>
        <end position="43"/>
    </location>
</feature>
<feature type="short sequence motif" description="Nuclear localization signal" evidence="11">
    <location>
        <begin position="58"/>
        <end position="64"/>
    </location>
</feature>
<feature type="short sequence motif" description="Nuclear localization signal" evidence="11">
    <location>
        <begin position="66"/>
        <end position="71"/>
    </location>
</feature>
<feature type="short sequence motif" description="DECH box" evidence="11">
    <location>
        <begin position="1318"/>
        <end position="1321"/>
    </location>
</feature>
<feature type="short sequence motif" description="SH3-binding" evidence="13">
    <location>
        <begin position="2325"/>
        <end position="2328"/>
    </location>
</feature>
<feature type="short sequence motif" description="Nuclear localization signal" evidence="2">
    <location>
        <begin position="2330"/>
        <end position="2338"/>
    </location>
</feature>
<feature type="compositionally biased region" description="Basic residues" evidence="18">
    <location>
        <begin position="7"/>
        <end position="16"/>
    </location>
</feature>
<feature type="compositionally biased region" description="Low complexity" evidence="18">
    <location>
        <begin position="32"/>
        <end position="47"/>
    </location>
</feature>
<feature type="compositionally biased region" description="Polar residues" evidence="18">
    <location>
        <begin position="2355"/>
        <end position="2376"/>
    </location>
</feature>
<feature type="active site" description="For protease NS2 activity; shared with dimeric partner" evidence="16">
    <location>
        <position position="954"/>
    </location>
</feature>
<feature type="active site" description="For protease NS2 activity; shared with dimeric partner" evidence="16">
    <location>
        <position position="974"/>
    </location>
</feature>
<feature type="active site" description="For protease NS2 activity; shared with dimeric partner" evidence="16">
    <location>
        <position position="995"/>
    </location>
</feature>
<feature type="active site" description="Charge relay system; for serine protease NS3 activity" evidence="17">
    <location>
        <position position="1085"/>
    </location>
</feature>
<feature type="active site" description="Charge relay system; for serine protease NS3 activity" evidence="17">
    <location>
        <position position="1109"/>
    </location>
</feature>
<feature type="active site" description="Charge relay system; for serine protease NS3 activity" evidence="17">
    <location>
        <position position="1167"/>
    </location>
</feature>
<feature type="binding site" evidence="17">
    <location>
        <position position="1125"/>
    </location>
    <ligand>
        <name>Zn(2+)</name>
        <dbReference type="ChEBI" id="CHEBI:29105"/>
        <label>1</label>
        <note>structural; for NS3 protease activity and NS2/3 auto-cleavage activity</note>
    </ligand>
</feature>
<feature type="binding site" evidence="17">
    <location>
        <position position="1127"/>
    </location>
    <ligand>
        <name>Zn(2+)</name>
        <dbReference type="ChEBI" id="CHEBI:29105"/>
        <label>1</label>
        <note>structural; for NS3 protease activity and NS2/3 auto-cleavage activity</note>
    </ligand>
</feature>
<feature type="binding site" evidence="17">
    <location>
        <position position="1173"/>
    </location>
    <ligand>
        <name>Zn(2+)</name>
        <dbReference type="ChEBI" id="CHEBI:29105"/>
        <label>1</label>
        <note>structural; for NS3 protease activity and NS2/3 auto-cleavage activity</note>
    </ligand>
</feature>
<feature type="binding site" evidence="17">
    <location>
        <position position="1177"/>
    </location>
    <ligand>
        <name>Zn(2+)</name>
        <dbReference type="ChEBI" id="CHEBI:29105"/>
        <label>1</label>
        <note>structural; for NS3 protease activity and NS2/3 auto-cleavage activity</note>
    </ligand>
</feature>
<feature type="binding site" evidence="15">
    <location>
        <begin position="1232"/>
        <end position="1239"/>
    </location>
    <ligand>
        <name>ATP</name>
        <dbReference type="ChEBI" id="CHEBI:30616"/>
    </ligand>
</feature>
<feature type="binding site" evidence="12">
    <location>
        <position position="1239"/>
    </location>
    <ligand>
        <name>Mg(2+)</name>
        <dbReference type="ChEBI" id="CHEBI:18420"/>
        <label>1</label>
        <note>catalytic; for NS3 helicase activity</note>
    </ligand>
</feature>
<feature type="binding site" evidence="12">
    <location>
        <position position="1319"/>
    </location>
    <ligand>
        <name>Mg(2+)</name>
        <dbReference type="ChEBI" id="CHEBI:18420"/>
        <label>1</label>
        <note>catalytic; for NS3 helicase activity</note>
    </ligand>
</feature>
<feature type="binding site" evidence="12">
    <location>
        <position position="2013"/>
    </location>
    <ligand>
        <name>Zn(2+)</name>
        <dbReference type="ChEBI" id="CHEBI:29105"/>
        <label>2</label>
        <note>structural</note>
    </ligand>
</feature>
<feature type="binding site" evidence="12">
    <location>
        <position position="2031"/>
    </location>
    <ligand>
        <name>Zn(2+)</name>
        <dbReference type="ChEBI" id="CHEBI:29105"/>
        <label>2</label>
        <note>structural</note>
    </ligand>
</feature>
<feature type="binding site" evidence="12">
    <location>
        <position position="2033"/>
    </location>
    <ligand>
        <name>Zn(2+)</name>
        <dbReference type="ChEBI" id="CHEBI:29105"/>
        <label>2</label>
        <note>structural</note>
    </ligand>
</feature>
<feature type="binding site" evidence="12">
    <location>
        <position position="2054"/>
    </location>
    <ligand>
        <name>Zn(2+)</name>
        <dbReference type="ChEBI" id="CHEBI:29105"/>
        <label>2</label>
        <note>structural</note>
    </ligand>
</feature>
<feature type="binding site" evidence="3">
    <location>
        <position position="2645"/>
    </location>
    <ligand>
        <name>Mg(2+)</name>
        <dbReference type="ChEBI" id="CHEBI:18420"/>
        <label>2</label>
        <note>catalytic; for RNA-directed RNA polymerase activity</note>
    </ligand>
</feature>
<feature type="binding site" evidence="3">
    <location>
        <position position="2743"/>
    </location>
    <ligand>
        <name>Mg(2+)</name>
        <dbReference type="ChEBI" id="CHEBI:18420"/>
        <label>2</label>
        <note>catalytic; for RNA-directed RNA polymerase activity</note>
    </ligand>
</feature>
<feature type="binding site" evidence="3">
    <location>
        <position position="2744"/>
    </location>
    <ligand>
        <name>Mg(2+)</name>
        <dbReference type="ChEBI" id="CHEBI:18420"/>
        <label>2</label>
        <note>catalytic; for RNA-directed RNA polymerase activity</note>
    </ligand>
</feature>
<feature type="site" description="Cleavage; by host signal peptide peptidase" evidence="2">
    <location>
        <begin position="177"/>
        <end position="178"/>
    </location>
</feature>
<feature type="site" description="Cleavage; by host signal peptidase" evidence="2">
    <location>
        <begin position="191"/>
        <end position="192"/>
    </location>
</feature>
<feature type="site" description="Cleavage; by host signal peptidase" evidence="2">
    <location>
        <begin position="383"/>
        <end position="384"/>
    </location>
</feature>
<feature type="site" description="Cleavage; by host signal peptidase">
    <location>
        <begin position="748"/>
        <end position="749"/>
    </location>
</feature>
<feature type="site" description="Cleavage; by host signal peptidase">
    <location>
        <begin position="811"/>
        <end position="812"/>
    </location>
</feature>
<feature type="site" description="Cleavage; by protease NS2" evidence="16">
    <location>
        <begin position="1028"/>
        <end position="1029"/>
    </location>
</feature>
<feature type="site" description="Cleavage; by serine protease NS3" evidence="5">
    <location>
        <begin position="1659"/>
        <end position="1660"/>
    </location>
</feature>
<feature type="site" description="Cleavage; by serine protease NS3" evidence="5">
    <location>
        <begin position="1713"/>
        <end position="1714"/>
    </location>
</feature>
<feature type="site" description="Cleavage; by serine protease NS3" evidence="5">
    <location>
        <begin position="1974"/>
        <end position="1975"/>
    </location>
</feature>
<feature type="site" description="Cleavage; by serine protease NS3" evidence="5">
    <location>
        <begin position="2425"/>
        <end position="2426"/>
    </location>
</feature>
<feature type="modified residue" description="N-acetylserine; by host" evidence="10">
    <location>
        <position position="2"/>
    </location>
</feature>
<feature type="modified residue" description="Phosphoserine; by host" evidence="7">
    <location>
        <position position="53"/>
    </location>
</feature>
<feature type="modified residue" description="Phosphoserine; by host" evidence="7">
    <location>
        <position position="99"/>
    </location>
</feature>
<feature type="modified residue" description="Phosphoserine; by host" evidence="7">
    <location>
        <position position="116"/>
    </location>
</feature>
<feature type="modified residue" description="Phosphoserine; by host" evidence="12">
    <location>
        <position position="2196"/>
    </location>
</feature>
<feature type="modified residue" description="Phosphoserine; by host" evidence="12">
    <location>
        <position position="2199"/>
    </location>
</feature>
<feature type="modified residue" description="Phosphoserine; by host" evidence="12">
    <location>
        <position position="2203"/>
    </location>
</feature>
<feature type="modified residue" description="Phosphoserine; by host" evidence="12">
    <location>
        <position position="2206"/>
    </location>
</feature>
<feature type="modified residue" description="Phosphoserine; by host" evidence="11">
    <location>
        <position position="2209"/>
    </location>
</feature>
<feature type="modified residue" description="Phosphoserine; by host" evidence="11">
    <location>
        <position position="2212"/>
    </location>
</feature>
<feature type="modified residue" description="Phosphoserine; by host" evidence="2">
    <location>
        <position position="2454"/>
    </location>
</feature>
<feature type="lipid moiety-binding region" description="S-palmitoyl cysteine; by host" evidence="5">
    <location>
        <position position="924"/>
    </location>
</feature>
<feature type="lipid moiety-binding region" description="S-palmitoyl cysteine; by host" evidence="5">
    <location>
        <position position="1974"/>
    </location>
</feature>
<feature type="glycosylation site" description="N-linked (GlcNAc...) asparagine; by host" evidence="5">
    <location>
        <position position="196"/>
    </location>
</feature>
<feature type="glycosylation site" description="N-linked (GlcNAc...) asparagine; by host" evidence="5">
    <location>
        <position position="209"/>
    </location>
</feature>
<feature type="glycosylation site" description="N-linked (GlcNAc...) asparagine; by host" evidence="5">
    <location>
        <position position="234"/>
    </location>
</feature>
<feature type="glycosylation site" description="N-linked (GlcNAc...) asparagine; by host" evidence="13">
    <location>
        <position position="250"/>
    </location>
</feature>
<feature type="glycosylation site" description="N-linked (GlcNAc...) asparagine; by host" evidence="5">
    <location>
        <position position="305"/>
    </location>
</feature>
<feature type="glycosylation site" description="N-linked (GlcNAc...) (high mannose) asparagine; by host" evidence="5">
    <location>
        <position position="416"/>
    </location>
</feature>
<feature type="glycosylation site" description="N-linked (GlcNAc...) (high mannose) asparagine; by host" evidence="5">
    <location>
        <position position="422"/>
    </location>
</feature>
<feature type="glycosylation site" description="N-linked (GlcNAc...) (high mannose) asparagine; by host" evidence="5">
    <location>
        <position position="429"/>
    </location>
</feature>
<feature type="glycosylation site" description="N-linked (GlcNAc...) asparagine; by host" evidence="13">
    <location>
        <position position="447"/>
    </location>
</feature>
<feature type="glycosylation site" description="N-linked (GlcNAc...) asparagine; by host" evidence="13">
    <location>
        <position position="475"/>
    </location>
</feature>
<feature type="glycosylation site" description="N-linked (GlcNAc...) asparagine; by host" evidence="13">
    <location>
        <position position="532"/>
    </location>
</feature>
<feature type="glycosylation site" description="N-linked (GlcNAc...) asparagine; by host" evidence="13">
    <location>
        <position position="556"/>
    </location>
</feature>
<feature type="glycosylation site" description="N-linked (GlcNAc...) (high mannose) asparagine; by host" evidence="5">
    <location>
        <position position="625"/>
    </location>
</feature>
<feature type="glycosylation site" description="N-linked (GlcNAc...) (high mannose) asparagine; by host" evidence="5">
    <location>
        <position position="647"/>
    </location>
</feature>
<feature type="disulfide bond" evidence="5">
    <location>
        <begin position="428"/>
        <end position="552"/>
    </location>
</feature>
<feature type="disulfide bond" evidence="5">
    <location>
        <begin position="451"/>
        <end position="458"/>
    </location>
</feature>
<feature type="disulfide bond" evidence="5">
    <location>
        <begin position="486"/>
        <end position="494"/>
    </location>
</feature>
<feature type="disulfide bond" evidence="5">
    <location>
        <begin position="503"/>
        <end position="508"/>
    </location>
</feature>
<feature type="disulfide bond" evidence="5">
    <location>
        <begin position="564"/>
        <end position="569"/>
    </location>
</feature>
<feature type="disulfide bond" evidence="5">
    <location>
        <begin position="583"/>
        <end position="587"/>
    </location>
</feature>
<feature type="disulfide bond" evidence="5">
    <location>
        <begin position="599"/>
        <end position="622"/>
    </location>
</feature>
<feature type="disulfide bond" evidence="5">
    <location>
        <begin position="609"/>
        <end position="646"/>
    </location>
</feature>
<feature type="disulfide bond" evidence="5">
    <location>
        <begin position="654"/>
        <end position="679"/>
    </location>
</feature>
<feature type="cross-link" description="Glycyl lysine isopeptide (Lys-Gly) (interchain with G-Cter in ubiquitin)" evidence="5">
    <location>
        <position position="2353"/>
    </location>
</feature>
<comment type="function">
    <molecule>Mature core protein</molecule>
    <text evidence="2 4 5 6 11 19">Packages viral RNA to form a viral nucleocapsid, and promotes virion budding (Probable). Participates in the viral particle production as a result of its interaction with the non-structural protein 5A (By similarity). Binds RNA and may function as a RNA chaperone to induce the RNA structural rearrangements taking place during virus replication (By similarity). Modulates viral translation initiation by interacting with viral IRES and 40S ribosomal subunit (By similarity). Affects various cell signaling pathways, host immunity and lipid metabolism (Probable). Prevents the establishment of cellular antiviral state by blocking the interferon-alpha/beta (IFN-alpha/beta) and IFN-gamma signaling pathways and by blocking the formation of phosphorylated STAT1 and promoting ubiquitin-mediated proteasome-dependent degradation of STAT1 (By similarity). Activates STAT3 leading to cellular transformation (By similarity). Regulates the activity of cellular genes, including c-myc and c-fos (By similarity). May repress the promoter of p53, and sequester CREB3 and SP110 isoform 3/Sp110b in the cytoplasm (By similarity). Represses cell cycle negative regulating factor CDKN1A, thereby interrupting an important check point of normal cell cycle regulation (By similarity). Targets transcription factors involved in the regulation of inflammatory responses and in the immune response: suppresses TNF-induced NF-kappa-B activation, and activates AP-1 (By similarity). Binds to dendritic cells (DCs) via C1QR1, resulting in down-regulation of T-lymphocytes proliferation (By similarity). Alters lipid metabolism by interacting with hepatocellular proteins involved in lipid accumulation and storage (By similarity). Induces up-regulation of FAS promoter activity, and thereby contributes to the increased triglyceride accumulation in hepatocytes (steatosis) (By similarity).</text>
</comment>
<comment type="function">
    <molecule>Envelope glycoprotein E1</molecule>
    <text evidence="5">Forms a heterodimer with envelope glycoprotein E2, which mediates virus attachment to the host cell, virion internalization through clathrin-dependent endocytosis and fusion with host membrane (By similarity). Fusion with the host cell is most likely mediated by both E1 and E2, through conformational rearrangements of the heterodimer required for fusion rather than a classical class II fusion mechanism (By similarity). E1/E2 heterodimer binds host apolipoproteins such as APOB and ApoE thereby forming a lipo-viro-particle (LVP) (By similarity). APOE associated to the LVP allows the initial virus attachment to cell surface receptors such as the heparan sulfate proteoglycans (HSPGs), syndecan-1 (SDC1), syndecan-1 (SDC2), the low-density lipoprotein receptor (LDLR) and scavenger receptor class B type I (SCARB1) (By similarity). The cholesterol transfer activity of SCARB1 allows E2 exposure and binding of E2 to SCARB1 and the tetraspanin CD81 (By similarity). E1/E2 heterodimer binding on CD81 activates the epithelial growth factor receptor (EGFR) signaling pathway (By similarity). Diffusion of the complex E1-E2-EGFR-SCARB1-CD81 to the cell lateral membrane allows further interaction with Claudin 1 (CLDN1) and occludin (OCLN) to finally trigger HCV entry (By similarity).</text>
</comment>
<comment type="function">
    <molecule>Envelope glycoprotein E2</molecule>
    <text evidence="4 5">Forms a heterodimer with envelope glycoprotein E1, which mediates virus attachment to the host cell, virion internalization through clathrin-dependent endocytosis and fusion with host membrane (By similarity). Fusion with the host cell is most likely mediated by both E1 and E2, through conformational rearrangements of the heterodimer required for fusion rather than a classical class II fusion mechanism (By similarity). The interaction between envelope glycoprotein E2 and host apolipoprotein E/APOE allows the proper assembly, maturation and infectivity of the viral particles (By similarity). This interaction is probably promoted via the up-regulation of cellular autophagy by the virus (By similarity). E1/E2 heterodimer binds host apolipoproteins such as APOB and APOE thereby forming a lipo-viro-particle (LVP) (By similarity). APOE associated to the LVP allows the initial virus attachment to cell surface receptors such as the heparan sulfate proteoglycans (HSPGs), syndecan-1 (SDC1), syndecan-1 (SDC2), the low-density lipoprotein receptor (LDLR) and scavenger receptor class B type I (SCARB1) (By similarity). The cholesterol transfer activity of SCARB1 allows E2 exposure and binding of E2 to SCARB1 and the tetraspanin CD81 (By similarity). E1/E2 heterodimer binding on CD81 activates the epithelial growth factor receptor (EGFR) signaling pathway (By similarity). Diffusion of the complex E1-E2-EGFR-SCARB1-CD81 to the cell lateral membrane allows further interaction with Claudin 1 (CLDN1) and occludin (OCLN) to finally trigger HCV entry (By similarity). Inhibits host EIF2AK2/PKR activation, preventing the establishment of an antiviral state (By similarity). Viral ligand for CD209/DC-SIGN and CLEC4M/DC-SIGNR, which are respectively found on dendritic cells (DCs), and on liver sinusoidal endothelial cells and macrophage-like cells of lymph node sinuses (By similarity). These interactions allow the capture of circulating HCV particles by these cells and subsequent facilitated transmission to permissive cells such as hepatocytes and lymphocyte subpopulations (By similarity). The interaction between E2 and host amino acid transporter complex formed by SLC3A2 and SLC7A5/LAT1 may facilitate viral entry into host cell (By similarity).</text>
</comment>
<comment type="function">
    <molecule>Viroporin p7</molecule>
    <text evidence="5 11 19">Ion channel protein that acts as a viroporin and plays an essential role in the assembly, envelopment and secretion of viral particles (By similarity). Regulates the host cell secretory pathway, which induces the intracellular retention of viral glycoproteins and favors assembly of viral particles (By similarity). Creates a pore in acidic organelles and releases Ca(2+) and H(+) in the cytoplasm of infected cells, leading to a productive viral infection (By similarity). High levels of cytoplasmic Ca(2+) may trigger membrane trafficking and transport of viral ER-associated proteins to viroplasms, sites of viral genome replication (Probable). This ionic imbalance induces the assembly of the inflammasome complex, which triggers the maturation of pro-IL-1beta into IL-1beta through the action of caspase-1 (By similarity). Targets also host mitochondria and induces mitochondrial depolarization (By similarity). In addition of its role as a viroporin, acts as a lipid raft adhesion factor (By similarity).</text>
</comment>
<comment type="function">
    <molecule>Protease NS2</molecule>
    <text evidence="3 5">Cysteine protease required for the proteolytic auto-cleavage between the non-structural proteins NS2 and NS3 (By similarity). The N-terminus of NS3 is required for the function of NS2 protease (active region NS2-3) (By similarity). Promotes the initiation of viral particle assembly by mediating the interaction between structural and non-structural proteins (By similarity).</text>
</comment>
<comment type="function">
    <molecule>Serine protease/helicase NS3</molecule>
    <text evidence="5 12">Displays three enzymatic activities: serine protease with a chymotrypsin-like fold, NTPase and RNA helicase (By similarity). NS3 serine protease, in association with NS4A, is responsible for the cleavages of NS3-NS4A, NS4A-NS4B, NS4B-NS5A and NS5A-NS5B (By similarity). The NS3/NS4A complex prevents phosphorylation of host IRF3, thus preventing the establishment of dsRNA induced antiviral state (By similarity). The NS3/NS4A complex induces host amino acid transporter component SLC3A2, thus contributing to HCV propagation (By similarity). NS3 RNA helicase binds to RNA and unwinds both dsDNA and dsRNA in the 3' to 5' direction, and likely resolves RNA complicated stable secondary structures in the template strand (By similarity). Binds a single ATP and catalyzes the unzipping of a single base pair of dsRNA (By similarity). Inhibits host antiviral proteins TBK1 and IRF3 thereby preventing the establishment of an antiviral state (By similarity). Cleaves host MAVS/CARDIF thereby preventing the establishment of an antiviral state (By similarity). Cleaves host TICAM1/TRIF, thereby disrupting TLR3 signaling and preventing the establishment of an antiviral state (By similarity).</text>
</comment>
<comment type="function">
    <molecule>Non-structural protein 4A</molecule>
    <text evidence="5 12">Peptide cofactor which forms a non-covalent complex with the N-terminal of NS3 serine protease (By similarity). The NS3/NS4A complex prevents phosphorylation of host IRF3, thus preventing the establishment of dsRNA induced antiviral state (By similarity). The NS3/NS4A complex induces host amino acid transporter component SLC3A2, thus contributing to HCV propagation (By similarity).</text>
</comment>
<comment type="function">
    <molecule>Non-structural protein 4B</molecule>
    <text evidence="5">Induces a specific membrane alteration that serves as a scaffold for the virus replication complex (By similarity). This membrane alteration gives rise to the so-called ER-derived membranous web that contains the replication complex (By similarity). NS4B self-interaction contributes to its function in membranous web formation (By similarity). Promotes host TRIF protein degradation in a CASP8-dependent manner thereby inhibiting host TLR3-mediated interferon signaling (By similarity). Disrupts the interaction between STING and TBK1 contributing to the inhibition of interferon signaling (By similarity).</text>
</comment>
<comment type="function">
    <molecule>Non-structural protein 5A</molecule>
    <text evidence="2 4 5 11 12">Phosphorylated protein that is indispensable for viral replication and assembly (By similarity). Both hypo- and hyperphosphorylated states are required for the viral life cycle (By similarity). The hyperphosphorylated form of NS5A is an inhibitor of viral replication (By similarity). Involved in RNA-binding and especially in binding to the viral genome (By similarity). Zinc is essential for RNA-binding (By similarity). Participates in the viral particle production as a result of its interaction with the mature viral core protein (By similarity). Its interaction with host VAPB may target the viral replication complex to vesicles (By similarity). Down-regulates viral IRES translation initiation (By similarity). Mediates interferon resistance, presumably by interacting with and inhibiting host EIF2AK2/PKR (By similarity). Prevents BIN1-induced apoptosis (By similarity). Acts as a transcriptional activator of some host genes important for viral replication when localized in the nucleus (By similarity). Via the interaction with host PACSIN2, modulates lipid droplet formation in order to promote virion assembly (By similarity). Modulates TNFRSF21/DR6 signaling pathway for viral propagation (By similarity).</text>
</comment>
<comment type="function">
    <molecule>RNA-directed RNA polymerase</molecule>
    <text evidence="5">RNA-dependent RNA polymerase that performs primer-template recognition and RNA synthesis during viral replication. Initiates RNA transcription/replication at a flavin adenine dinucleotide (FAD), resulting in a 5'- FAD cap on viral RNAs. In this way, recognition of viral 5' RNA by host pattern recognition receptors can be bypassed, thereby evading activation of antiviral pathways.</text>
</comment>
<comment type="catalytic activity">
    <molecule>Serine protease/helicase NS3</molecule>
    <reaction evidence="5">
        <text>Hydrolysis of four peptide bonds in the viral precursor polyprotein, commonly with Asp or Glu in the P6 position, Cys or Thr in P1 and Ser or Ala in P1'.</text>
        <dbReference type="EC" id="3.4.21.98"/>
    </reaction>
</comment>
<comment type="catalytic activity">
    <molecule>Serine protease/helicase NS3</molecule>
    <reaction evidence="5">
        <text>a ribonucleoside 5'-triphosphate + H2O = a ribonucleoside 5'-diphosphate + phosphate + H(+)</text>
        <dbReference type="Rhea" id="RHEA:23680"/>
        <dbReference type="ChEBI" id="CHEBI:15377"/>
        <dbReference type="ChEBI" id="CHEBI:15378"/>
        <dbReference type="ChEBI" id="CHEBI:43474"/>
        <dbReference type="ChEBI" id="CHEBI:57930"/>
        <dbReference type="ChEBI" id="CHEBI:61557"/>
        <dbReference type="EC" id="3.6.1.15"/>
    </reaction>
</comment>
<comment type="catalytic activity">
    <molecule>Serine protease/helicase NS3</molecule>
    <reaction evidence="5">
        <text>ATP + H2O = ADP + phosphate + H(+)</text>
        <dbReference type="Rhea" id="RHEA:13065"/>
        <dbReference type="ChEBI" id="CHEBI:15377"/>
        <dbReference type="ChEBI" id="CHEBI:15378"/>
        <dbReference type="ChEBI" id="CHEBI:30616"/>
        <dbReference type="ChEBI" id="CHEBI:43474"/>
        <dbReference type="ChEBI" id="CHEBI:456216"/>
        <dbReference type="EC" id="3.6.4.13"/>
    </reaction>
</comment>
<comment type="catalytic activity">
    <molecule>RNA-directed RNA polymerase</molecule>
    <reaction evidence="14">
        <text>RNA(n) + a ribonucleoside 5'-triphosphate = RNA(n+1) + diphosphate</text>
        <dbReference type="Rhea" id="RHEA:21248"/>
        <dbReference type="Rhea" id="RHEA-COMP:14527"/>
        <dbReference type="Rhea" id="RHEA-COMP:17342"/>
        <dbReference type="ChEBI" id="CHEBI:33019"/>
        <dbReference type="ChEBI" id="CHEBI:61557"/>
        <dbReference type="ChEBI" id="CHEBI:140395"/>
        <dbReference type="EC" id="2.7.7.48"/>
    </reaction>
</comment>
<comment type="cofactor">
    <molecule>Protease NS2</molecule>
    <cofactor evidence="3">
        <name>Zn(2+)</name>
        <dbReference type="ChEBI" id="CHEBI:29105"/>
    </cofactor>
    <text evidence="3">Activity of protease NS2 is dependent on zinc ions and completely inhibited by EDTA. This is probably due to the fact that NS2 protease activity needs NS3 N-terminus that binds a zinc atom (active region NS2-3).</text>
</comment>
<comment type="cofactor">
    <molecule>Serine protease/helicase NS3</molecule>
    <cofactor evidence="3">
        <name>Zn(2+)</name>
        <dbReference type="ChEBI" id="CHEBI:29105"/>
    </cofactor>
    <cofactor evidence="12">
        <name>Mg(2+)</name>
        <dbReference type="ChEBI" id="CHEBI:18420"/>
    </cofactor>
    <text evidence="3 12">Binds 1 zinc ion, which has a structural role (By similarity). The magnesium ion is essential for the helicase activity (By similarity).</text>
</comment>
<comment type="cofactor">
    <molecule>RNA-directed RNA polymerase</molecule>
    <cofactor evidence="3">
        <name>Mg(2+)</name>
        <dbReference type="ChEBI" id="CHEBI:18420"/>
    </cofactor>
    <text evidence="3">Binds 2 magnesium ion that constitute a dinuclear catalytic metal center.</text>
</comment>
<comment type="activity regulation">
    <molecule>Viroporin p7</molecule>
    <text evidence="2 5">Inhibited by the antiviral drug hexamethylene amiloride (By similarity). Inhibition by amantadine appears to be genotype-dependent (By similarity). Also inhibited by long-alkyl-chain iminosugar derivatives (By similarity).</text>
</comment>
<comment type="activity regulation">
    <molecule>RNA-directed RNA polymerase</molecule>
    <text evidence="5">Activity is up-regulated by PRK2/PKN2-mediated phosphorylation.</text>
</comment>
<comment type="subunit">
    <molecule>Mature core protein</molecule>
    <text evidence="2 4 5 6 8 9 11">Homooligomer (By similarity). Interacts with E1 (via C-terminus) (By similarity). Interacts with the non-structural protein 5A (By similarity). Interacts (via N-terminus) with host STAT1 (via SH2 domain); this interaction results in decreased STAT1 phosphorylation and ubiquitin-mediated proteasome-dependent STAT1 degradation, leading to decreased IFN-stimulated gene transcription (By similarity). Interacts with host STAT3; this interaction constitutively activates STAT3 (By similarity). Interacts with host LTBR receptor (By similarity). Interacts with host TNFRSF1A receptor and possibly induces apoptosis (By similarity). Interacts with host HNRPK (By similarity). Interacts with host YWHAE (By similarity). Interacts with host UBE3A/E6AP (By similarity). Interacts with host DDX3X (By similarity). Interacts with host APOA2 (By similarity). Interacts with host RXRA protein (By similarity). Interacts with host SP110 isoform 3/Sp110b; this interaction sequesters the transcriptional corepressor SP110 away from the nucleus (By similarity). Interacts with host CREB3 nuclear transcription protein; this interaction triggers cell transformation (By similarity). Interacts with host ACY3 (By similarity). Interacts with host C1QR1 (By similarity). Interacts with host RBM24; this interaction, which enhances the interaction of the mature core protein with 5'-UTR, may inhibit viral translation and favor replication (By similarity). Interacts with host EIF2AK2/PKR; this interaction induces the autophosphorylation of EIF2AK2 (By similarity). Part of the viral assembly initiation complex composed of NS2, E1, E2, NS3, NS4A, NS5A and the mature core protein (By similarity).</text>
</comment>
<comment type="subunit">
    <molecule>Envelope glycoprotein E1</molecule>
    <text evidence="5 11">Forms a heterodimer with envelope glycoprotein E2 (By similarity). Interacts with mature core protein (By similarity). Interacts with protease NS2 (By similarity). The heterodimer E1/E2 interacts with host CLDN1; this interaction plays a role in viral entry into host cell (By similarity). Interacts with host SPSB2 (via C-terminus) (By similarity). Part of the viral assembly initiation complex composed of NS2, E1, E2, NS3, NS4A, NS5A and the mature core protein (By similarity). Interacts with host NEURL3; this interaction prevents E1 binding to glycoprotein E2 (By similarity).</text>
</comment>
<comment type="subunit">
    <molecule>Envelope glycoprotein E2</molecule>
    <text evidence="5 11 12">Forms a heterodimer with envelope glycoprotein E1 (By similarity). Interacts with host CD81 and SCARB1 receptors; these interactions play a role in viral entry into host cell (By similarity). Interacts with host EIF2AK2/PKR; this interaction inhibits EIF2AK2 and probably allows the virus to evade the innate immune response (By similarity). Interacts with host CD209/DC-SIGN and CLEC4M/DC-SIGNR (By similarity). Interact with host SPCS1; this interaction is essential for viral particle assembly (By similarity). Interacts with protease NS2 (By similarity). The heterodimer E1/E2 interacts with host CLDN1; this interaction plays a role in viral entry into host cell (By similarity). Part of the viral assembly initiation complex composed of NS2, E1, E2, NS3, NS4A, NS5A and the mature core protein (By similarity). Interacts with host SLC3A2/4F2hc; the interaction may facilitate viral entry into host cell (By similarity). Interacts with human PLSCR1 (By similarity).</text>
</comment>
<comment type="subunit">
    <molecule>Viroporin p7</molecule>
    <text evidence="1 5 11">Homohexamer (By similarity). Homoheptamer (By similarity). Interacts with protease NS2 (By similarity).</text>
</comment>
<comment type="subunit">
    <molecule>Protease NS2</molecule>
    <text evidence="5 11">Homodimer (By similarity). Interacts with host SPCS1; this interaction is essential for viral particle assembly (By similarity). Interacts with envelope glycoprotein E1 (By similarity). Interacts with envelope glycoprotein E2 (By similarity). Interacts with viroporin p7 (By similarity). Interacts with serine protease/helicase NS3 (By similarity). Part of the replication complex composed of NS2, NS3, NS4A, NS4B, NS5A and the RNA-directed RNA polymerase embedded in an ER-derived membranous web (By similarity). Part of the viral assembly initiation complex composed of NS2, E1, E2, NS3, NS4A, NS5A and the mature core protein (By similarity).</text>
</comment>
<comment type="subunit">
    <molecule>Serine protease/helicase NS3</molecule>
    <text evidence="3 5 11 12">Interacts with protease NS2 (By similarity). Interacts with non-structural protein 4A; this interaction stabilizes the folding of NS3 serine protease (By similarity). NS3-NS4A interaction is essential for NS3 activation and allows membrane anchorage of the latter (By similarity). NS3/NS4A complex also prevents phosphorylation of host IRF3, thus preventing the establishment of dsRNA induced antiviral state (By similarity). Interacts with host MAVS; this interaction leads to the cleavage and inhibition of host MAVS (By similarity). Interacts with host TICAM1; this interaction leads to the cleavage and inhibition of host TICAM1 (By similarity). Interacts with host TANK-binding kinase/TBK1; this interaction results in the inhibition of the association between TBK1 and IRF3, which leads to the inhibition of IRF3 activation (By similarity). Interacts with host RBM24 (By similarity). Part of the replication complex composed of NS2, NS3, NS4A, NS4B, NS5A and the RNA-directed RNA polymerase embedded in an ER-derived membranous web (By similarity). Part of the viral assembly initiation complex composed of NS2, E1, E2, NS3, NS4A, NS5A and the mature core protein (By similarity).</text>
</comment>
<comment type="subunit">
    <molecule>Non-structural protein 4A</molecule>
    <text evidence="2 3 5 11">Interacts with NS3 serine protease; this interaction stabilizes the folding of NS3 serine protease (By similarity). NS3-NS4A interaction is essential for NS3 activation and allows membrane anchorage of the latter (By similarity). Interacts with non-structural protein 5A (via N-terminus) (By similarity). Part of the replication complex composed of NS2, NS3, NS4A, NS4B, NS5A and the RNA-directed RNA polymerase embedded in an ER-derived membranous web (By similarity). Part of the viral assembly initiation complex composed of NS2, E1, E2, NS3, NS4A, NS5A and the mature core protein (By similarity).</text>
</comment>
<comment type="subunit">
    <molecule>Non-structural protein 4B</molecule>
    <text evidence="5 11">Homomultimer (By similarity). Interacts with non-structural protein NS5A (By similarity). Interacts with host PLA2G4C; this interaction likely initiates the recruitment of replication complexes to lipid droplets (By similarity). Interacts with host STING; this interaction disrupts the interaction between STING and TBK1 thereby suppressing the interferon signaling (By similarity). Part of the replication complex composed of NS2, NS3, NS4A, NS4B, NS5A and the RNA-directed RNA polymerase embedded in an ER-derived membranous web (By similarity).</text>
</comment>
<comment type="subunit">
    <molecule>Non-structural protein 5A</molecule>
    <text evidence="2 3 4 5 11">Monomer. Homodimer; dimerization is required for RNA-binding (By similarity). Interacts with the mature core protein (By similarity). Interacts (via N-terminus) with non-structural protein 4A (By similarity). Interacts with non-structural protein 4B. Interacts (via region D2) with RNA-directed RNA polymerase (By similarity). Part of the viral assembly initiation complex composed of NS2, E1, E2, NS3, NS4A, NS5A and the mature core protein (By similarity). Part of the replication complex composed of NS2, NS3, NS4A, NS4B, NS5A and the RNA-directed RNA polymerase embedded in an ER-derived membranous web (By similarity). Interacts with host GRB2 (By similarity). Interacts with host BIN1 (By similarity). Interacts with host PIK3R1 (By similarity). Interacts with host SRCAP (By similarity). Interacts with host FKBP8 (By similarity). Interacts (via C-terminus) with host VAPB (via MSP domain). Interacts with host EIF2AK2/PKR; this interaction leads to disruption of EIF2AK2 dimerization by NS5A and probably allows the virus to evade the innate immune response. Interacts (via N-terminus) with host PACSIN2 (via N-terminus); this interaction attenuates protein kinase C alpha-mediated phosphorylation of PACSIN2 by disrupting the interaction between PACSIN2 and PRKCA (By similarity). Interacts (via N-terminus) with host SRC kinase (via SH2 domain) (By similarity). Interacts with most Src-family kinases (By similarity). Interacts with host IFI27 and SKP2; promotes the ubiquitin-mediated proteasomal degradation of NS5A (By similarity). Interacts with host GPS2 (By similarity). Interacts with host TNFRSF21; this interaction allows the modulation by the virus of JNK, p38 MAPK, STAT3, and Akt signaling pathways in a DR6-dependent manner. Interacts (via N-terminus) with host CIDEB (via N-terminus); this interaction seems to regulate the association of HCV particles with APOE (By similarity). Interacts with host CHKA/Choline Kinase-alpha; CHKA bridges host PI4KA and NS5A and potentiates NS5A-stimulated PI4KA activity, which then facilitates the targeting of the ternary complex to the ER for viral replication (By similarity). Interacts with host SPSB2 (via C-terminus); this interaction targets NS5A for ubiquitination and degradation (By similarity). Interacts with host RAB18; this interaction may promote the association of NS5A and other replicase components with lipid droplets (By similarity). Interacts (via region D2) with host PPIA/CYPA; the interaction stimulates RNA-binding ability of NS5A and is dependent on the peptidyl-prolyl cis-trans isomerase activity of PPIA/CYPA. Interacts with host TRIM14; this interaction induces the degradation of NS5A (By similarity).</text>
</comment>
<comment type="subunit">
    <molecule>RNA-directed RNA polymerase</molecule>
    <text evidence="5">Homooligomer (By similarity). Interacts with non-structural protein 5A (By similarity). Interacts with host VAPB (By similarity). Interacts with host PRK2/PKN2 (By similarity). Interacts with host HNRNPA1 and SEPT6; these interactions facilitate viral replication (By similarity). Part of the replication complex composed of NS2, NS3, NS4A, NS4B, NS5A and the RNA-directed RNA polymerase (By similarity).</text>
</comment>
<comment type="subcellular location">
    <molecule>Core protein precursor</molecule>
    <subcellularLocation>
        <location evidence="4">Host endoplasmic reticulum membrane</location>
        <topology evidence="13">Single-pass membrane protein</topology>
    </subcellularLocation>
    <subcellularLocation>
        <location evidence="4">Host mitochondrion membrane</location>
        <topology evidence="13">Single-pass type I membrane protein</topology>
    </subcellularLocation>
    <text>The C-terminal transmembrane domain of the core protein precursor contains an ER signal leading the nascent polyprotein to the ER membrane.</text>
</comment>
<comment type="subcellular location">
    <molecule>Mature core protein</molecule>
    <subcellularLocation>
        <location evidence="11">Virion</location>
    </subcellularLocation>
    <subcellularLocation>
        <location evidence="11">Host cytoplasm</location>
    </subcellularLocation>
    <subcellularLocation>
        <location evidence="2">Host nucleus</location>
    </subcellularLocation>
    <subcellularLocation>
        <location evidence="11">Host lipid droplet</location>
    </subcellularLocation>
    <text evidence="5">Only a minor proportion of core protein is present in the nucleus (By similarity). Probably present on the surface of lipid droplets (By similarity).</text>
</comment>
<comment type="subcellular location">
    <molecule>Envelope glycoprotein E1</molecule>
    <subcellularLocation>
        <location evidence="19">Virion membrane</location>
        <topology evidence="19">Single-pass type I membrane protein</topology>
    </subcellularLocation>
    <subcellularLocation>
        <location>Host endoplasmic reticulum membrane</location>
        <topology evidence="5">Single-pass type I membrane protein</topology>
    </subcellularLocation>
    <text evidence="5">The C-terminal transmembrane domain acts as a signal sequence and forms a hairpin structure before cleavage by host signal peptidase (By similarity). After cleavage, the membrane sequence is retained at the C-terminus of the protein, serving as ER membrane anchor (By similarity). A reorientation of the second hydrophobic stretch occurs after cleavage producing a single reoriented transmembrane domain (By similarity). These events explain the final topology of the protein (By similarity).</text>
</comment>
<comment type="subcellular location">
    <molecule>Envelope glycoprotein E2</molecule>
    <subcellularLocation>
        <location evidence="19">Virion membrane</location>
        <topology evidence="19">Single-pass type I membrane protein</topology>
    </subcellularLocation>
    <subcellularLocation>
        <location>Host endoplasmic reticulum membrane</location>
        <topology evidence="5">Single-pass type I membrane protein</topology>
    </subcellularLocation>
    <subcellularLocation>
        <location evidence="12">Host lipid droplet</location>
    </subcellularLocation>
    <text evidence="5">The C-terminal transmembrane domain acts as a signal sequence and forms a hairpin structure before cleavage by host signal peptidase (By similarity). After cleavage, the membrane sequence is retained at the C-terminus of the protein, serving as ER membrane anchor (By similarity). A reorientation of the second hydrophobic stretch occurs after cleavage producing a single reoriented transmembrane domain (By similarity). These events explain the final topology of the protein (By similarity).</text>
</comment>
<comment type="subcellular location">
    <molecule>Viroporin p7</molecule>
    <subcellularLocation>
        <location evidence="5">Host endoplasmic reticulum membrane</location>
        <topology evidence="5">Multi-pass membrane protein</topology>
    </subcellularLocation>
    <subcellularLocation>
        <location evidence="5">Host mitochondrion</location>
    </subcellularLocation>
    <subcellularLocation>
        <location evidence="5">Host cell membrane</location>
    </subcellularLocation>
    <text evidence="5">The C-terminus of p7 membrane domain acts as a signal sequence (By similarity). After cleavage by host signal peptidase, the membrane sequence is retained at the C-terminus of the protein, serving as ER membrane anchor (By similarity). ER retention of p7 is leaky and a small fraction reaches the plasma membrane (By similarity).</text>
</comment>
<comment type="subcellular location">
    <molecule>Protease NS2</molecule>
    <subcellularLocation>
        <location evidence="5">Host endoplasmic reticulum membrane</location>
        <topology evidence="5">Multi-pass membrane protein</topology>
    </subcellularLocation>
    <subcellularLocation>
        <location evidence="12">Host lipid droplet</location>
    </subcellularLocation>
    <text evidence="11">Probably present on the surface of lipid droplets.</text>
</comment>
<comment type="subcellular location">
    <molecule>Serine protease/helicase NS3</molecule>
    <subcellularLocation>
        <location evidence="19">Host endoplasmic reticulum membrane</location>
        <topology evidence="19">Peripheral membrane protein</topology>
    </subcellularLocation>
    <text evidence="19">NS3 is associated to the ER membrane through its binding to NS4A.</text>
</comment>
<comment type="subcellular location">
    <molecule>Non-structural protein 4A</molecule>
    <subcellularLocation>
        <location evidence="19">Host endoplasmic reticulum membrane</location>
        <topology evidence="19">Single-pass type I membrane protein</topology>
    </subcellularLocation>
    <text>Host membrane insertion occurs after processing by the NS3 protease.</text>
</comment>
<comment type="subcellular location">
    <molecule>Non-structural protein 4B</molecule>
    <subcellularLocation>
        <location evidence="5">Host endoplasmic reticulum membrane</location>
        <topology evidence="5">Multi-pass membrane protein</topology>
    </subcellularLocation>
    <text evidence="5">A reorientation of the N-terminus into the ER lumen occurs post-translationally.</text>
</comment>
<comment type="subcellular location">
    <molecule>Non-structural protein 5A</molecule>
    <subcellularLocation>
        <location evidence="5">Host endoplasmic reticulum membrane</location>
        <topology evidence="5">Peripheral membrane protein</topology>
    </subcellularLocation>
    <subcellularLocation>
        <location evidence="5">Host cytoplasm</location>
        <location evidence="5">Host perinuclear region</location>
    </subcellularLocation>
    <subcellularLocation>
        <location evidence="2">Host mitochondrion</location>
    </subcellularLocation>
    <subcellularLocation>
        <location evidence="5">Host cytoplasm</location>
    </subcellularLocation>
    <subcellularLocation>
        <location evidence="2">Host nucleus</location>
    </subcellularLocation>
    <subcellularLocation>
        <location evidence="12">Host lipid droplet</location>
    </subcellularLocation>
    <text evidence="2 5">Host membrane insertion occurs after processing by the NS3 protease (By similarity). Localizes at the surface of lipid droplets (By similarity).</text>
</comment>
<comment type="subcellular location">
    <molecule>RNA-directed RNA polymerase</molecule>
    <subcellularLocation>
        <location evidence="5">Host cytoplasm</location>
    </subcellularLocation>
    <subcellularLocation>
        <location>Host endoplasmic reticulum membrane</location>
        <topology evidence="5">Single-pass type IV membrane protein</topology>
    </subcellularLocation>
    <text evidence="5">Host membrane insertion occurs after processing by the NS3 protease.</text>
</comment>
<comment type="domain">
    <molecule>Envelope glycoprotein E1</molecule>
    <text evidence="5">The transmembrane regions of envelope E1 and E2 glycoproteins are involved in heterodimer formation, ER localization, and assembly of these proteins.</text>
</comment>
<comment type="domain">
    <molecule>Envelope glycoprotein E2</molecule>
    <text evidence="3 5">The transmembrane regions of envelope E1 and E2 glycoproteins are involved in heterodimer formation, ER localization, and assembly of these proteins (By similarity). Envelope E2 glycoprotein contain two highly variable regions called hypervariable region 1 and 2 (HVR1 and HVR2) (By similarity). E2 also contain two segments involved in CD81-binding (By similarity). HVR1 is implicated in the SCARB1-mediated cell entry and probably acts as a regulator of the association of particles with lipids (By similarity).</text>
</comment>
<comment type="domain">
    <molecule>Protease NS2</molecule>
    <text evidence="3">The N-terminus of NS3 is required for the catalytic activity of protease NS2 (By similarity). The minimal catalytic region includes the C-terminus of NS2 and the N-terminus NS3 protease domain (active region NS2-3) (By similarity).</text>
</comment>
<comment type="domain">
    <molecule>Serine protease/helicase NS3</molecule>
    <text evidence="2 5">The N-terminal one-third contains the protease activity (By similarity). This region contains a zinc atom that does not belong to the active site, but may play a structural rather than a catalytic role (By similarity). This region is essential for the activity of protease NS2, maybe by contributing to the folding of the latter (By similarity). The NTPase/helicase activity is located in the twothirds C-terminus of NS3, this domain contains the NTPase and RNA-binding regions (By similarity).</text>
</comment>
<comment type="domain">
    <molecule>Non-structural protein 4B</molecule>
    <text evidence="11">Contains a glycine zipper region that critically contributes to the biogenesis of functional ER-derived replication organelles.</text>
</comment>
<comment type="domain">
    <molecule>Non-structural protein 5A</molecule>
    <text evidence="2 5">The N-terminus of NS5A acts as membrane anchor (By similarity). The central part of NS5A contains a variable region called interferon sensitivity determining region (ISDR) and seems to be intrinsically disordered and interacts with NS5B and host EIF2AK2 (By similarity). The C-terminus of NS5A contains a variable region called variable region 3 (V3) (By similarity). ISDR and V3 may be involved in sensitivity and/or resistance to IFN-alpha therapy (By similarity). The C-terminus contains a nuclear localization signal (By similarity). The SH3-binding domain is involved in the interaction with host BIN1, GRB2 and Src-family kinases (By similarity).</text>
</comment>
<comment type="PTM">
    <molecule>Genome polyprotein</molecule>
    <text evidence="4 5">Specific enzymatic cleavages in vivo yield mature proteins (By similarity). The structural proteins, core, E1, E2 and p7 are produced by proteolytic processing by host signal peptidases (By similarity). The core protein precursor is synthesized as a 23 kDa, which is retained in the ER membrane through the hydrophobic signal peptide (By similarity). Cleavage by the signal peptidase releases the 21 kDa mature core protein (By similarity). The cleavage of the core protein precursor occurs between aminoacids 176 and 188 but the exact cleavage site is not known (By similarity). Some degraded forms of the core protein appear as well during the course of infection (By similarity). The other proteins (p7, NS2, NS3, NS4A, NS4B, NS5A and NS5B) are cleaved by the viral proteases (By similarity). Autoprocessing between NS2 and NS3 is mediated by the NS2 cysteine protease catalytic domain and regulated by the NS3 N-terminal domain (By similarity).</text>
</comment>
<comment type="PTM">
    <molecule>Mature core protein</molecule>
    <text evidence="7">Phosphorylated by host PKC and PKA.</text>
</comment>
<comment type="PTM">
    <molecule>Mature core protein</molecule>
    <text evidence="8">Ubiquitinated; mediated by UBE3A and leading to core protein subsequent proteasomal degradation.</text>
</comment>
<comment type="PTM">
    <molecule>Envelope glycoprotein E1</molecule>
    <text evidence="5">Highly N-glycosylated.</text>
</comment>
<comment type="PTM">
    <molecule>Envelope glycoprotein E2</molecule>
    <text evidence="5">Highly N-glycosylated.</text>
</comment>
<comment type="PTM">
    <molecule>Protease NS2</molecule>
    <text evidence="5">Palmitoylation is required for NS2/3 autoprocessing and E2 recruitment to membranes.</text>
</comment>
<comment type="PTM">
    <molecule>Non-structural protein 4B</molecule>
    <text evidence="5">Palmitoylated. This modification may play a role in its polymerization or in protein-protein interactions.</text>
</comment>
<comment type="PTM">
    <molecule>Non-structural protein 5A</molecule>
    <text evidence="2 4">Phosphorylated on serines in a basal form termed p56 (By similarity). p58 is a hyperphosphorylated form of p56 (By similarity). p56 and p58 coexist in the cell in roughly equivalent amounts (By similarity). Hyperphosphorylation is dependent on the presence of NS4A (By similarity). Host CSNK1A1/CKI-alpha or RPS6KB1 kinases may be responsible for NS5A phosphorylation (By similarity).</text>
</comment>
<comment type="PTM">
    <molecule>Non-structural protein 5A</molecule>
    <text evidence="11">Tyrosine phosphorylation is essential for the interaction with host SRC.</text>
</comment>
<comment type="PTM">
    <molecule>Non-structural protein 5A</molecule>
    <text evidence="5">Ubiquitinated (By similarity). Ubiquitination, most probably at Lys-2353, mediated by host IFI27 and SKP2 leads to proteasomal degradation, restricting viral infection (By similarity). Ubiquitination by host TRIM22 leads to interruption of viral replication (By similarity).</text>
</comment>
<comment type="PTM">
    <molecule>RNA-directed RNA polymerase</molecule>
    <text evidence="2">The N-terminus is phosphorylated by host PRK2/PKN2.</text>
</comment>
<comment type="miscellaneous">
    <text evidence="19">Viral particle assembly takes place at the surface of ER-derived membranes in close proximity to lipid droplets. NS2 associates with E1/E2 glycoproteins, NS3 and NS5A, which interacts with the viral RNA and core protein to promote genome encapsidation. The nucleocapsid buds at the ER membrane where E1/E2 glycoproteins are anchored and afterward associate with nascent lipid droplet to acquire APOE and APOC. Secretion of viral particles is probably regulated by viroporin p7.</text>
</comment>
<comment type="miscellaneous">
    <molecule>Non-structural protein 5A</molecule>
    <text evidence="19">Cell culture adaptation of the virus leads to mutations in NS5A, reducing its inhibitory effect on replication.</text>
</comment>
<comment type="miscellaneous">
    <molecule>Mature core protein</molecule>
    <text evidence="2">Exerts viral interference on hepatitis B virus when HCV and HBV coinfect the same cell, by suppressing HBV gene expression, RNA encapsidation and budding.</text>
</comment>
<comment type="similarity">
    <text evidence="19">Belongs to the hepacivirus polyprotein family.</text>
</comment>
<comment type="caution">
    <text evidence="19">The core gene probably also codes for alternative reading frame proteins (ARFPs). Many functions depicted for the core protein might belong to the ARFPs.</text>
</comment>
<sequence>MSTLPKPQRKTKRNTNRRPMDVKFPGGGQIVGGVYLLPRRGPRLGVRATRKTSERSQPRGRRQPIPKARQSQGRHWAQPGYPWPLYGNEGCGWAGWLLSPRGSRPNWGPNDPRRRSRNLGKVIDTLTCGFADLMGYIPVVGAPLGGVAAALAHGVRAIEDGINYATGNLPGCSFSIFLLALLSCLTTPASAVHYRNISGIYHLTNDCPNSSIIYEADNIIMHTPGCVPCVKTGNKSQCWVPVAPTLAVANASVPIRGFRSHVDLLVGSAAACSALYIGDLCGGVFLVGQLFTFRPRQHTTVQECNCSIYTGHITGHRMAWDMMMNWSPTVTFITSSLLRVPQLLLEIALEGHWGVIGALLYYSMVANWAKVFAVLLLFAGVDATTHIGSSASATTNRLTSFFSPGSKQNVQLIKTNGSWHINRTALNCNDSLHTGFIAGLLYAHRFNSSGCPERLSSCRPLHAFEQGWGPLTYANISGPSNDKPYCWHYPPRPCDIVPARSVCGPVYCFTPSPVVVGTTDRKGLPTYTWGANESDVFLLRSTRPPRGSWFGCTWMNSTGFVKTCGAPPCNTRPVGSGNDTLVCPTDCFRKHPEATYARCGSGPWLTPRCLVNYPYRLWHYPCTVNYTIHKVRMFVGGIEHRFEAACNWTRGERCELDDRDRVEMSPLLFSTTQLSILPCSFTTMPALSTGLIHLHQNIVDVQYLYGVSSAVVSWAVKWEYIVLAFLVLAVARVCACLWLMFLVGQAEAALENLIVLNATSAAGSQGWVWGVVFICAAWYIRGRAAPITTYAILQLWPLLLLVLALPRRAYAYNGEEAASLGMLAIVIITIFTLTPAYKTLLISTLWWIQYYIARAEAMLYVWVPSLQVRGGRDAVILLTCLLHPQLGFEVTKAILALLGPLYILQYSLLKTPYFVRAHILLRVCMFLRGVAGGKYVQAALLRLGAWTGTYIYDHLTPLSDWACDGLRDLAVAVEPVVFSPMEKKVITWGADTVACGDIISGLPVSARRGNLIFLGPADDIRDGGWRLLAPITAYAQQTRGLVGTIVTSLTGRDKNEVEGEIQVVSTATQSFLATTVNGVLWTVYHGAGSKTLAGPKGPICQMYTNVDQDLVGWPAPPGARSLTPCTCGSSDLYLVTRNADVIPARRRGDTRAALLSPRPISTLKGSSGGPMLCPSGHVAGIFRAAVCTRGVAKSLDFVPVENMQSTARSPSFSDNTTPPAVPQTYQVGYLHAPTGSGKSTKVPAAYAAQGYKVLVLNPSVAATLGFGSYMSTAHGIDPNIRTGVRTITTGGAITYSTYGKFLADGGCSGGAYDIIICDECHSTDPTTVLGIGTVLDQAETAGVRLTVLATATPPGSVTVPHPNITEVALSSTGEVPFYGKAIPLEYIKGGRHLIFCHSKKKCDELAKQLTSLGLNAVAFYRGVDVSVIPTSGDVVVCATDALMTGYTGDFDSVIDCNVSVTQVVDFSLDPTFTIETTTMPQDAVSRSQRRGRTGRGKHGVYRYVSQGERPSGIFDTVVLCEAYDTGCAWYELTPSETTVRLRAYLNTPGLPVCQDHLEFWEGVFTGLTHIDAHLLSQTKQGGENFAYLVAYQATVCARAKAPPPSWDTMWKCLIRLKPMLTGPTPLLYRLGAVQNEITTTHPITKYIMTCMSADLEVITSTWVLVGGVLAALAAYCLSVGCVVVCGRISTTGKPVLIPDREVLYQQFDEMEECSRHIPYLVEGQHLAEQFKQKVLGLIQTTTRQAEEIEPVVHSAWPKLEQFWQKHLWNFVSGIQYLAGLSTLPGNPAVASLMSFSASLTSPLSTSTTLLLNILGGWVASQLANPTASTAFVVSGLAGATVGSIGLGRVLVDIIAGYGAGVSGALVAFKIMSGETPSAEDMVNLLPALLSPGALVVGVVCAAILRRHAGPAEGATQWMNRLIAFASRGNHVSPTHYVPETDTSRQVMAILSSLTVTSLLRKLHEWINSDWSTPCSGSWLRDIWDWVCTVLSDFKVWLKSKLVPALPGVPFLSCQRGFRGVWRGDGICRTTCPCGADIVGHVKNGSMRISGSRWCSNIWHGTFPINATTTGPSVPIPEPNYKRALWRVSAEEYVEVARVGDSHFVVGATNQDLKCPCQVPAPEFFTEVDGVRLHRFAPACKPLLRDEISFLVGLNSYAIGSQLPCEPEPDVTVVTSMLVDPSHLTAEAAARRLARGSPPSCASSLASQLSAPSLKATCTTHCAHPDADLIEANLLWRQEVGGNITRVESENKVIVLDSFDPLVPEYDDREPSVPAECHRPNRPKFPPALPIWARPDYNPPLLETWKKPDYAPPLVHGCALPSPVQPPVPPPRRKSVVHLDDSTVATALAELAEKSFPTQPASTPDSDSGHPTTSKSSDQADEGEDTPSEAGSYSSMPPLEGEPGDPDLSSGSWSTVSEEGDSVVCCSMSYSWTGALVTPCAAEEEKLPINPLSNSLIRHHNLVYSTTTRSAAMRQKKVTFDRLQILDQHYNNVVKEVKLRASGVTAKLLSVEEACSLTPPHSARSKFGYGAKDVRSHTSKAINHINSVWEDLLEDNQTPIPTTIMAKNEVFCADVSKGGRKPARLIVYPDLGVRVCEKRALYDVTRKLPTAIMGDAYGFQYSPKQRVDQLLKMWRSKKTPMGFSYDTRCFDSTVTEHDIKTERDVYLSCKLDPVARKAIESLTERLYIGGPMYNSRGQLCGTRRCRASGVLTTSLGNTMTCFIKAEAACRAAGLTNYDMLVCGDDLVVIAESAGVQEDASNLRAFTEAMTRYSAPPGDEPHPAYDLELITSCSSNVSVAHDHTGQRYYYLTRDPTTPLSRAAWETARHTPVNSWLGNIIMYAPAIWVRMVLMTHFFQILQAQEQLDKVLDFDMYGVTYSVSPLQLPAIIQRLHGMAAFSLHGYSPTELNRVGACLRKLGAPPLRAWRHRARAVRAKLIAQGGGAAICGKYLFNWAVKTKLKLTPIPDAARLDLSGWFISGFSGGDIYHSVSRARPRIFLLCLLLLSVGVGIFLLPAR</sequence>
<reference key="1">
    <citation type="journal article" date="1998" name="J. Gen. Virol.">
        <title>The entire nucleotide sequences of three hepatitis C virus isolates in genetic groups 7-9 and comparison with those in the other eight genetic groups.</title>
        <authorList>
            <person name="Tokita H."/>
            <person name="Okamoto H."/>
            <person name="Iizuka H."/>
            <person name="Kishimoto J."/>
            <person name="Tsuda F."/>
            <person name="Miyakawa Y."/>
            <person name="Mayumi M."/>
        </authorList>
    </citation>
    <scope>NUCLEOTIDE SEQUENCE [GENOMIC RNA]</scope>
</reference>
<reference key="2">
    <citation type="journal article" date="2000" name="J. Viral Hepat.">
        <title>Properties of the hepatitis C virus core protein: a structural protein that modulates cellular processes.</title>
        <authorList>
            <person name="McLauchlan J."/>
        </authorList>
    </citation>
    <scope>REVIEW</scope>
</reference>
<reference key="3">
    <citation type="journal article" date="2004" name="Hepatology">
        <title>Structural biology of hepatitis C virus.</title>
        <authorList>
            <person name="Penin F."/>
            <person name="Dubuisson J."/>
            <person name="Rey F.A."/>
            <person name="Moradpour D."/>
            <person name="Pawlotsky J.-M."/>
        </authorList>
    </citation>
    <scope>REVIEW</scope>
</reference>
<organism>
    <name type="scientific">Hepatitis C virus genotype 6k (isolate VN405)</name>
    <name type="common">HCV</name>
    <dbReference type="NCBI Taxonomy" id="356425"/>
    <lineage>
        <taxon>Viruses</taxon>
        <taxon>Riboviria</taxon>
        <taxon>Orthornavirae</taxon>
        <taxon>Kitrinoviricota</taxon>
        <taxon>Flasuviricetes</taxon>
        <taxon>Amarillovirales</taxon>
        <taxon>Flaviviridae</taxon>
        <taxon>Hepacivirus</taxon>
        <taxon>Hepacivirus hominis</taxon>
    </lineage>
</organism>
<dbReference type="EC" id="3.4.22.-" evidence="3"/>
<dbReference type="EC" id="3.4.21.98" evidence="5"/>
<dbReference type="EC" id="3.6.1.15" evidence="5"/>
<dbReference type="EC" id="3.6.4.13" evidence="5"/>
<dbReference type="EC" id="2.7.7.48" evidence="5"/>
<dbReference type="EMBL" id="D84264">
    <property type="protein sequence ID" value="BAA32666.1"/>
    <property type="molecule type" value="Genomic_RNA"/>
</dbReference>
<dbReference type="PIR" id="PQ0804">
    <property type="entry name" value="PQ0804"/>
</dbReference>
<dbReference type="SMR" id="O92531"/>
<dbReference type="MEROPS" id="C18.001"/>
<dbReference type="euHCVdb" id="D84264"/>
<dbReference type="Proteomes" id="UP000002674">
    <property type="component" value="Genome"/>
</dbReference>
<dbReference type="GO" id="GO:0044167">
    <property type="term" value="C:host cell endoplasmic reticulum membrane"/>
    <property type="evidence" value="ECO:0007669"/>
    <property type="project" value="UniProtKB-SubCell"/>
</dbReference>
<dbReference type="GO" id="GO:0044186">
    <property type="term" value="C:host cell lipid droplet"/>
    <property type="evidence" value="ECO:0007669"/>
    <property type="project" value="UniProtKB-SubCell"/>
</dbReference>
<dbReference type="GO" id="GO:0044191">
    <property type="term" value="C:host cell mitochondrial membrane"/>
    <property type="evidence" value="ECO:0007669"/>
    <property type="project" value="UniProtKB-SubCell"/>
</dbReference>
<dbReference type="GO" id="GO:0042025">
    <property type="term" value="C:host cell nucleus"/>
    <property type="evidence" value="ECO:0007669"/>
    <property type="project" value="UniProtKB-SubCell"/>
</dbReference>
<dbReference type="GO" id="GO:0044220">
    <property type="term" value="C:host cell perinuclear region of cytoplasm"/>
    <property type="evidence" value="ECO:0007669"/>
    <property type="project" value="UniProtKB-SubCell"/>
</dbReference>
<dbReference type="GO" id="GO:0020002">
    <property type="term" value="C:host cell plasma membrane"/>
    <property type="evidence" value="ECO:0007669"/>
    <property type="project" value="UniProtKB-SubCell"/>
</dbReference>
<dbReference type="GO" id="GO:0016020">
    <property type="term" value="C:membrane"/>
    <property type="evidence" value="ECO:0007669"/>
    <property type="project" value="UniProtKB-KW"/>
</dbReference>
<dbReference type="GO" id="GO:1990904">
    <property type="term" value="C:ribonucleoprotein complex"/>
    <property type="evidence" value="ECO:0007669"/>
    <property type="project" value="UniProtKB-KW"/>
</dbReference>
<dbReference type="GO" id="GO:0019031">
    <property type="term" value="C:viral envelope"/>
    <property type="evidence" value="ECO:0007669"/>
    <property type="project" value="UniProtKB-KW"/>
</dbReference>
<dbReference type="GO" id="GO:0019013">
    <property type="term" value="C:viral nucleocapsid"/>
    <property type="evidence" value="ECO:0007669"/>
    <property type="project" value="UniProtKB-KW"/>
</dbReference>
<dbReference type="GO" id="GO:0055036">
    <property type="term" value="C:virion membrane"/>
    <property type="evidence" value="ECO:0007669"/>
    <property type="project" value="UniProtKB-SubCell"/>
</dbReference>
<dbReference type="GO" id="GO:0005524">
    <property type="term" value="F:ATP binding"/>
    <property type="evidence" value="ECO:0007669"/>
    <property type="project" value="UniProtKB-KW"/>
</dbReference>
<dbReference type="GO" id="GO:0016887">
    <property type="term" value="F:ATP hydrolysis activity"/>
    <property type="evidence" value="ECO:0007669"/>
    <property type="project" value="RHEA"/>
</dbReference>
<dbReference type="GO" id="GO:0015267">
    <property type="term" value="F:channel activity"/>
    <property type="evidence" value="ECO:0007669"/>
    <property type="project" value="UniProtKB-KW"/>
</dbReference>
<dbReference type="GO" id="GO:0004197">
    <property type="term" value="F:cysteine-type endopeptidase activity"/>
    <property type="evidence" value="ECO:0007669"/>
    <property type="project" value="InterPro"/>
</dbReference>
<dbReference type="GO" id="GO:0003723">
    <property type="term" value="F:RNA binding"/>
    <property type="evidence" value="ECO:0007669"/>
    <property type="project" value="UniProtKB-KW"/>
</dbReference>
<dbReference type="GO" id="GO:0003724">
    <property type="term" value="F:RNA helicase activity"/>
    <property type="evidence" value="ECO:0007669"/>
    <property type="project" value="UniProtKB-EC"/>
</dbReference>
<dbReference type="GO" id="GO:0003968">
    <property type="term" value="F:RNA-directed RNA polymerase activity"/>
    <property type="evidence" value="ECO:0007669"/>
    <property type="project" value="UniProtKB-KW"/>
</dbReference>
<dbReference type="GO" id="GO:0004252">
    <property type="term" value="F:serine-type endopeptidase activity"/>
    <property type="evidence" value="ECO:0007669"/>
    <property type="project" value="InterPro"/>
</dbReference>
<dbReference type="GO" id="GO:0017124">
    <property type="term" value="F:SH3 domain binding"/>
    <property type="evidence" value="ECO:0007669"/>
    <property type="project" value="UniProtKB-KW"/>
</dbReference>
<dbReference type="GO" id="GO:0005198">
    <property type="term" value="F:structural molecule activity"/>
    <property type="evidence" value="ECO:0007669"/>
    <property type="project" value="InterPro"/>
</dbReference>
<dbReference type="GO" id="GO:0008270">
    <property type="term" value="F:zinc ion binding"/>
    <property type="evidence" value="ECO:0007669"/>
    <property type="project" value="InterPro"/>
</dbReference>
<dbReference type="GO" id="GO:0075512">
    <property type="term" value="P:clathrin-dependent endocytosis of virus by host cell"/>
    <property type="evidence" value="ECO:0007669"/>
    <property type="project" value="UniProtKB-KW"/>
</dbReference>
<dbReference type="GO" id="GO:0039654">
    <property type="term" value="P:fusion of virus membrane with host endosome membrane"/>
    <property type="evidence" value="ECO:0007669"/>
    <property type="project" value="UniProtKB-KW"/>
</dbReference>
<dbReference type="GO" id="GO:0034220">
    <property type="term" value="P:monoatomic ion transmembrane transport"/>
    <property type="evidence" value="ECO:0007669"/>
    <property type="project" value="UniProtKB-KW"/>
</dbReference>
<dbReference type="GO" id="GO:0006508">
    <property type="term" value="P:proteolysis"/>
    <property type="evidence" value="ECO:0007669"/>
    <property type="project" value="UniProtKB-KW"/>
</dbReference>
<dbReference type="GO" id="GO:0039520">
    <property type="term" value="P:symbiont-mediated activation of host autophagy"/>
    <property type="evidence" value="ECO:0007669"/>
    <property type="project" value="UniProtKB-KW"/>
</dbReference>
<dbReference type="GO" id="GO:0039645">
    <property type="term" value="P:symbiont-mediated perturbation of host cell cycle G1/S transition checkpoint"/>
    <property type="evidence" value="ECO:0007669"/>
    <property type="project" value="UniProtKB-KW"/>
</dbReference>
<dbReference type="GO" id="GO:0039545">
    <property type="term" value="P:symbiont-mediated suppression of host cytoplasmic pattern recognition receptor signaling pathway via inhibition of MAVS activity"/>
    <property type="evidence" value="ECO:0007669"/>
    <property type="project" value="UniProtKB-KW"/>
</dbReference>
<dbReference type="GO" id="GO:0039563">
    <property type="term" value="P:symbiont-mediated suppression of host JAK-STAT cascade via inhibition of STAT1 activity"/>
    <property type="evidence" value="ECO:0007669"/>
    <property type="project" value="UniProtKB-KW"/>
</dbReference>
<dbReference type="GO" id="GO:0039527">
    <property type="term" value="P:symbiont-mediated suppression of host TRAF-mediated signal transduction"/>
    <property type="evidence" value="ECO:0007669"/>
    <property type="project" value="UniProtKB-KW"/>
</dbReference>
<dbReference type="GO" id="GO:0039502">
    <property type="term" value="P:symbiont-mediated suppression of host type I interferon-mediated signaling pathway"/>
    <property type="evidence" value="ECO:0007669"/>
    <property type="project" value="UniProtKB-KW"/>
</dbReference>
<dbReference type="GO" id="GO:0019087">
    <property type="term" value="P:symbiont-mediated transformation of host cell"/>
    <property type="evidence" value="ECO:0007669"/>
    <property type="project" value="InterPro"/>
</dbReference>
<dbReference type="GO" id="GO:0039694">
    <property type="term" value="P:viral RNA genome replication"/>
    <property type="evidence" value="ECO:0007669"/>
    <property type="project" value="InterPro"/>
</dbReference>
<dbReference type="GO" id="GO:0019062">
    <property type="term" value="P:virion attachment to host cell"/>
    <property type="evidence" value="ECO:0007669"/>
    <property type="project" value="UniProtKB-KW"/>
</dbReference>
<dbReference type="CDD" id="cd20903">
    <property type="entry name" value="HCV_p7"/>
    <property type="match status" value="1"/>
</dbReference>
<dbReference type="CDD" id="cd23202">
    <property type="entry name" value="Hepacivirus_RdRp"/>
    <property type="match status" value="1"/>
</dbReference>
<dbReference type="FunFam" id="2.40.10.120:FF:000003">
    <property type="entry name" value="Genome polyprotein"/>
    <property type="match status" value="1"/>
</dbReference>
<dbReference type="FunFam" id="3.30.160.890:FF:000001">
    <property type="entry name" value="Genome polyprotein"/>
    <property type="match status" value="1"/>
</dbReference>
<dbReference type="FunFam" id="3.30.70.270:FF:000015">
    <property type="entry name" value="Genome polyprotein"/>
    <property type="match status" value="1"/>
</dbReference>
<dbReference type="FunFam" id="3.40.50.300:FF:000557">
    <property type="entry name" value="Genome polyprotein"/>
    <property type="match status" value="1"/>
</dbReference>
<dbReference type="FunFam" id="3.40.50.300:FF:000717">
    <property type="entry name" value="Genome polyprotein"/>
    <property type="match status" value="1"/>
</dbReference>
<dbReference type="Gene3D" id="2.40.10.120">
    <property type="match status" value="1"/>
</dbReference>
<dbReference type="Gene3D" id="3.30.70.270">
    <property type="match status" value="2"/>
</dbReference>
<dbReference type="Gene3D" id="6.10.250.1610">
    <property type="match status" value="1"/>
</dbReference>
<dbReference type="Gene3D" id="6.10.250.1750">
    <property type="match status" value="1"/>
</dbReference>
<dbReference type="Gene3D" id="6.10.250.2920">
    <property type="match status" value="1"/>
</dbReference>
<dbReference type="Gene3D" id="2.20.25.210">
    <property type="entry name" value="Hepatitis C NS5A, domain 1B"/>
    <property type="match status" value="1"/>
</dbReference>
<dbReference type="Gene3D" id="4.10.710.10">
    <property type="entry name" value="Hepatitis C Virus Capsid Protein, Chain A"/>
    <property type="match status" value="1"/>
</dbReference>
<dbReference type="Gene3D" id="3.30.160.890">
    <property type="entry name" value="Hepatitis C virus envelope glycoprotein E1, chain C"/>
    <property type="match status" value="1"/>
</dbReference>
<dbReference type="Gene3D" id="2.30.30.710">
    <property type="entry name" value="Hepatitis C virus non-structural protein NS2, C-terminal domain"/>
    <property type="match status" value="1"/>
</dbReference>
<dbReference type="Gene3D" id="1.20.1280.150">
    <property type="entry name" value="Hepatitis C virus non-structural protein NS2, N-terminal domain"/>
    <property type="match status" value="1"/>
</dbReference>
<dbReference type="Gene3D" id="2.20.25.220">
    <property type="entry name" value="Hepatitis C virus NS5A, 1B domain"/>
    <property type="match status" value="1"/>
</dbReference>
<dbReference type="Gene3D" id="3.40.50.300">
    <property type="entry name" value="P-loop containing nucleotide triphosphate hydrolases"/>
    <property type="match status" value="2"/>
</dbReference>
<dbReference type="Gene3D" id="1.10.820.10">
    <property type="entry name" value="RNA Helicase Chain A , domain 3"/>
    <property type="match status" value="1"/>
</dbReference>
<dbReference type="Gene3D" id="2.40.10.10">
    <property type="entry name" value="Trypsin-like serine proteases"/>
    <property type="match status" value="1"/>
</dbReference>
<dbReference type="InterPro" id="IPR043502">
    <property type="entry name" value="DNA/RNA_pol_sf"/>
</dbReference>
<dbReference type="InterPro" id="IPR011492">
    <property type="entry name" value="Flavi_DEAD"/>
</dbReference>
<dbReference type="InterPro" id="IPR002521">
    <property type="entry name" value="HCV_Core_C"/>
</dbReference>
<dbReference type="InterPro" id="IPR044896">
    <property type="entry name" value="HCV_core_chain_A"/>
</dbReference>
<dbReference type="InterPro" id="IPR002522">
    <property type="entry name" value="HCV_core_N"/>
</dbReference>
<dbReference type="InterPro" id="IPR002519">
    <property type="entry name" value="HCV_Env"/>
</dbReference>
<dbReference type="InterPro" id="IPR002531">
    <property type="entry name" value="HCV_NS1"/>
</dbReference>
<dbReference type="InterPro" id="IPR002518">
    <property type="entry name" value="HCV_NS2"/>
</dbReference>
<dbReference type="InterPro" id="IPR042205">
    <property type="entry name" value="HCV_NS2_C"/>
</dbReference>
<dbReference type="InterPro" id="IPR042209">
    <property type="entry name" value="HCV_NS2_N"/>
</dbReference>
<dbReference type="InterPro" id="IPR000745">
    <property type="entry name" value="HCV_NS4a"/>
</dbReference>
<dbReference type="InterPro" id="IPR001490">
    <property type="entry name" value="HCV_NS4b"/>
</dbReference>
<dbReference type="InterPro" id="IPR002868">
    <property type="entry name" value="HCV_NS5a"/>
</dbReference>
<dbReference type="InterPro" id="IPR013192">
    <property type="entry name" value="HCV_NS5A_1a"/>
</dbReference>
<dbReference type="InterPro" id="IPR013193">
    <property type="entry name" value="HCV_NS5a_1B_dom"/>
</dbReference>
<dbReference type="InterPro" id="IPR038568">
    <property type="entry name" value="HCV_NS5A_1B_sf"/>
</dbReference>
<dbReference type="InterPro" id="IPR024350">
    <property type="entry name" value="HCV_NS5a_C"/>
</dbReference>
<dbReference type="InterPro" id="IPR049913">
    <property type="entry name" value="HCV_p7"/>
</dbReference>
<dbReference type="InterPro" id="IPR014001">
    <property type="entry name" value="Helicase_ATP-bd"/>
</dbReference>
<dbReference type="InterPro" id="IPR001650">
    <property type="entry name" value="Helicase_C-like"/>
</dbReference>
<dbReference type="InterPro" id="IPR004109">
    <property type="entry name" value="HepC_NS3_protease"/>
</dbReference>
<dbReference type="InterPro" id="IPR054175">
    <property type="entry name" value="NS3_helicase_C"/>
</dbReference>
<dbReference type="InterPro" id="IPR038170">
    <property type="entry name" value="NS5A_1a_sf"/>
</dbReference>
<dbReference type="InterPro" id="IPR027417">
    <property type="entry name" value="P-loop_NTPase"/>
</dbReference>
<dbReference type="InterPro" id="IPR009003">
    <property type="entry name" value="Peptidase_S1_PA"/>
</dbReference>
<dbReference type="InterPro" id="IPR043504">
    <property type="entry name" value="Peptidase_S1_PA_chymotrypsin"/>
</dbReference>
<dbReference type="InterPro" id="IPR043128">
    <property type="entry name" value="Rev_trsase/Diguanyl_cyclase"/>
</dbReference>
<dbReference type="InterPro" id="IPR007094">
    <property type="entry name" value="RNA-dir_pol_PSvirus"/>
</dbReference>
<dbReference type="InterPro" id="IPR002166">
    <property type="entry name" value="RNA_pol_HCV"/>
</dbReference>
<dbReference type="Pfam" id="PF07652">
    <property type="entry name" value="Flavi_DEAD"/>
    <property type="match status" value="1"/>
</dbReference>
<dbReference type="Pfam" id="PF01543">
    <property type="entry name" value="HCV_capsid"/>
    <property type="match status" value="1"/>
</dbReference>
<dbReference type="Pfam" id="PF01542">
    <property type="entry name" value="HCV_core"/>
    <property type="match status" value="1"/>
</dbReference>
<dbReference type="Pfam" id="PF01539">
    <property type="entry name" value="HCV_env"/>
    <property type="match status" value="1"/>
</dbReference>
<dbReference type="Pfam" id="PF01560">
    <property type="entry name" value="HCV_NS1"/>
    <property type="match status" value="1"/>
</dbReference>
<dbReference type="Pfam" id="PF01538">
    <property type="entry name" value="HCV_NS2"/>
    <property type="match status" value="1"/>
</dbReference>
<dbReference type="Pfam" id="PF01006">
    <property type="entry name" value="HCV_NS4a"/>
    <property type="match status" value="1"/>
</dbReference>
<dbReference type="Pfam" id="PF01001">
    <property type="entry name" value="HCV_NS4b"/>
    <property type="match status" value="1"/>
</dbReference>
<dbReference type="Pfam" id="PF01506">
    <property type="entry name" value="HCV_NS5a"/>
    <property type="match status" value="1"/>
</dbReference>
<dbReference type="Pfam" id="PF08300">
    <property type="entry name" value="HCV_NS5a_1a"/>
    <property type="match status" value="1"/>
</dbReference>
<dbReference type="Pfam" id="PF08301">
    <property type="entry name" value="HCV_NS5a_1b"/>
    <property type="match status" value="1"/>
</dbReference>
<dbReference type="Pfam" id="PF12941">
    <property type="entry name" value="HCV_NS5a_C"/>
    <property type="match status" value="1"/>
</dbReference>
<dbReference type="Pfam" id="PF22027">
    <property type="entry name" value="NS3_helicase_C"/>
    <property type="match status" value="1"/>
</dbReference>
<dbReference type="Pfam" id="PF02907">
    <property type="entry name" value="Peptidase_S29"/>
    <property type="match status" value="1"/>
</dbReference>
<dbReference type="Pfam" id="PF00998">
    <property type="entry name" value="RdRP_3"/>
    <property type="match status" value="1"/>
</dbReference>
<dbReference type="SMART" id="SM00487">
    <property type="entry name" value="DEXDc"/>
    <property type="match status" value="1"/>
</dbReference>
<dbReference type="SUPFAM" id="SSF56672">
    <property type="entry name" value="DNA/RNA polymerases"/>
    <property type="match status" value="1"/>
</dbReference>
<dbReference type="SUPFAM" id="SSF52540">
    <property type="entry name" value="P-loop containing nucleoside triphosphate hydrolases"/>
    <property type="match status" value="2"/>
</dbReference>
<dbReference type="SUPFAM" id="SSF50494">
    <property type="entry name" value="Trypsin-like serine proteases"/>
    <property type="match status" value="1"/>
</dbReference>
<dbReference type="PROSITE" id="PS51693">
    <property type="entry name" value="HCV_NS2_PRO"/>
    <property type="match status" value="1"/>
</dbReference>
<dbReference type="PROSITE" id="PS51192">
    <property type="entry name" value="HELICASE_ATP_BIND_1"/>
    <property type="match status" value="1"/>
</dbReference>
<dbReference type="PROSITE" id="PS51194">
    <property type="entry name" value="HELICASE_CTER"/>
    <property type="match status" value="1"/>
</dbReference>
<dbReference type="PROSITE" id="PS51822">
    <property type="entry name" value="HV_PV_NS3_PRO"/>
    <property type="match status" value="1"/>
</dbReference>
<dbReference type="PROSITE" id="PS50507">
    <property type="entry name" value="RDRP_SSRNA_POS"/>
    <property type="match status" value="1"/>
</dbReference>
<organismHost>
    <name type="scientific">Homo sapiens</name>
    <name type="common">Human</name>
    <dbReference type="NCBI Taxonomy" id="9606"/>
</organismHost>
<proteinExistence type="inferred from homology"/>